<comment type="function">
    <text evidence="3 11 12 16 17 18 20 21 22 23 24 25 26 27 28 29 30 31 33 34 35 36 38 40 41 42 44 45 46 48 50 51">NAD-dependent protein deacetylase, which deacetylates internal lysines on histone and alpha-tubulin as well as many other proteins such as key transcription factors (PubMed:12620231, PubMed:16648462, PubMed:18249187, PubMed:18332217, PubMed:18995842, PubMed:20543840, PubMed:20587414, PubMed:21081649, PubMed:21726808, PubMed:21949390, PubMed:22014574, PubMed:22771473, PubMed:23468428, PubMed:23908241, PubMed:24177535, PubMed:24681946, PubMed:24769394, PubMed:24940000). Participates in the modulation of multiple and diverse biological processes such as cell cycle control, genomic integrity, microtubule dynamics, cell differentiation, metabolic networks, and autophagy (PubMed:12620231, PubMed:16648462, PubMed:18249187, PubMed:18332217, PubMed:18995842, PubMed:20543840, PubMed:20587414, PubMed:21081649, PubMed:21726808, PubMed:21949390, PubMed:22014574, PubMed:22771473, PubMed:23468428, PubMed:23908241, PubMed:24177535, PubMed:24681946, PubMed:24769394, PubMed:24940000). Plays a major role in the control of cell cycle progression and genomic stability (PubMed:12697818, PubMed:16909107, PubMed:17488717, PubMed:17726514, PubMed:19282667, PubMed:23468428). Functions in the antephase checkpoint preventing precocious mitotic entry in response to microtubule stress agents, and hence allowing proper inheritance of chromosomes (PubMed:12697818, PubMed:16909107, PubMed:17488717, PubMed:17726514, PubMed:19282667, PubMed:23468428). Positively regulates the anaphase promoting complex/cyclosome (APC/C) ubiquitin ligase complex activity by deacetylating CDC20 and FZR1, then allowing progression through mitosis (PubMed:22014574). Associates both with chromatin at transcriptional start sites (TSSs) and enhancers of active genes (PubMed:23468428). Plays a role in cell cycle and chromatin compaction through epigenetic modulation of the regulation of histone H4 'Lys-20' methylation (H4K20me1) during early mitosis (PubMed:23468428). Specifically deacetylates histone H4 at 'Lys-16' (H4K16ac) between the G2/M transition and metaphase enabling H4K20me1 deposition by KMT5A leading to ulterior levels of H4K20me2 and H4K20me3 deposition throughout cell cycle, and mitotic S-phase progression (PubMed:23468428). Deacetylates KMT5A modulating KMT5A chromatin localization during the mitotic stress response (PubMed:23468428). Also deacetylates histone H3 at 'Lys-57' (H3K56ac) during the mitotic G2/M transition (PubMed:20587414). Upon bacterium Listeria monocytogenes infection, deacetylates 'Lys-18' of histone H3 in a receptor tyrosine kinase MET- and PI3K/Akt-dependent manner, thereby inhibiting transcriptional activity and promoting late stages of listeria infection (PubMed:23908241). During oocyte meiosis progression, may deacetylate histone H4 at 'Lys-16' (H4K16ac) and alpha-tubulin, regulating spindle assembly and chromosome alignment by influencing microtubule dynamics and kinetochore function (PubMed:24940000). Deacetylates histone H4 at 'Lys-16' (H4K16ac) at the VEGFA promoter and thereby contributes to regulate expression of VEGFA, a key regulator of angiogenesis (PubMed:24940000). Deacetylates alpha-tubulin at 'Lys-40' and hence controls neuronal motility, oligodendroglial cell arbor projection processes and proliferation of non-neuronal cells (PubMed:18332217, PubMed:18995842). Phosphorylation at Ser-368 by a G1/S-specific cyclin E-CDK2 complex inactivates SIRT2-mediated alpha-tubulin deacetylation, negatively regulating cell adhesion, cell migration and neurite outgrowth during neuronal differentiation (PubMed:17488717). Deacetylates PARD3 and participates in the regulation of Schwann cell peripheral myelination formation during early postnatal development and during postinjury remyelination (PubMed:21949390). Involved in several cellular metabolic pathways (PubMed:20543840, PubMed:21726808, PubMed:24769394). Plays a role in the regulation of blood glucose homeostasis by deacetylating and stabilizing phosphoenolpyruvate carboxykinase PCK1 activity in response to low nutrient availability (PubMed:21726808). Acts as a key regulator in the pentose phosphate pathway (PPP) by deacetylating and activating the glucose-6-phosphate G6PD enzyme, and therefore, stimulates the production of cytosolic NADPH to counteract oxidative damage (PubMed:24769394). Maintains energy homeostasis in response to nutrient deprivation as well as energy expenditure by inhibiting adipogenesis and promoting lipolysis (PubMed:20543840). Attenuates adipocyte differentiation by deacetylating and promoting FOXO1 interaction to PPARG and subsequent repression of PPARG-dependent transcriptional activity (PubMed:20543840). Plays a role in the regulation of lysosome-mediated degradation of protein aggregates by autophagy in neuronal cells (PubMed:20543840). Deacetylates FOXO1 in response to oxidative stress or serum deprivation, thereby negatively regulating FOXO1-mediated autophagy (PubMed:20543840). Deacetylates a broad range of transcription factors and co-regulators regulating target gene expression. Deacetylates transcriptional factor FOXO3 stimulating the ubiquitin ligase SCF(SKP2)-mediated FOXO3 ubiquitination and degradation (By similarity). Deacetylates HIF1A and therefore promotes HIF1A degradation and inhibition of HIF1A transcriptional activity in tumor cells in response to hypoxia (PubMed:24681946). Deacetylates RELA in the cytoplasm inhibiting NF-kappaB-dependent transcription activation upon TNF-alpha stimulation (PubMed:21081649). Inhibits transcriptional activation by deacetylating p53/TP53 and EP300 (PubMed:18249187, PubMed:18995842). Also deacetylates EIF5A (PubMed:22771473). Functions as a negative regulator on oxidative stress-tolerance in response to anoxia-reoxygenation conditions (PubMed:24769394). Plays a role as tumor suppressor (PubMed:22014574). In addition to protein deacetylase activity, also has activity toward long-chain fatty acyl groups and mediates protein-lysine demyristoylation and depalmitoylation of target proteins, such as ARF6 and KRAS, thereby regulating their association with membranes (PubMed:25704306, PubMed:29239724, PubMed:32103017).</text>
</comment>
<comment type="function">
    <molecule>Isoform 1</molecule>
    <text evidence="42">Deacetylates EP300, alpha-tubulin and histone H3 and H4.</text>
</comment>
<comment type="function">
    <molecule>Isoform 2</molecule>
    <text evidence="42">Deacetylates EP300, alpha-tubulin and histone H3 and H4.</text>
</comment>
<comment type="function">
    <molecule>Isoform 5</molecule>
    <text evidence="42">Lacks deacetylation activity, at least toward known SIRT2 targets.</text>
</comment>
<comment type="catalytic activity">
    <reaction evidence="4 9 10 16 25 42 43 46 47">
        <text>N(6)-acetyl-L-lysyl-[protein] + NAD(+) + H2O = 2''-O-acetyl-ADP-D-ribose + nicotinamide + L-lysyl-[protein]</text>
        <dbReference type="Rhea" id="RHEA:43636"/>
        <dbReference type="Rhea" id="RHEA-COMP:9752"/>
        <dbReference type="Rhea" id="RHEA-COMP:10731"/>
        <dbReference type="ChEBI" id="CHEBI:15377"/>
        <dbReference type="ChEBI" id="CHEBI:17154"/>
        <dbReference type="ChEBI" id="CHEBI:29969"/>
        <dbReference type="ChEBI" id="CHEBI:57540"/>
        <dbReference type="ChEBI" id="CHEBI:61930"/>
        <dbReference type="ChEBI" id="CHEBI:83767"/>
        <dbReference type="EC" id="2.3.1.286"/>
    </reaction>
</comment>
<comment type="catalytic activity">
    <reaction evidence="48 51">
        <text>N(6)-tetradecanoyl-L-lysyl-[protein] + NAD(+) + H2O = 2''-O-tetradecanoyl-ADP-D-ribose + nicotinamide + L-lysyl-[protein]</text>
        <dbReference type="Rhea" id="RHEA:70567"/>
        <dbReference type="Rhea" id="RHEA-COMP:9752"/>
        <dbReference type="Rhea" id="RHEA-COMP:15437"/>
        <dbReference type="ChEBI" id="CHEBI:15377"/>
        <dbReference type="ChEBI" id="CHEBI:17154"/>
        <dbReference type="ChEBI" id="CHEBI:29969"/>
        <dbReference type="ChEBI" id="CHEBI:57540"/>
        <dbReference type="ChEBI" id="CHEBI:141129"/>
        <dbReference type="ChEBI" id="CHEBI:189674"/>
    </reaction>
    <physiologicalReaction direction="left-to-right" evidence="48 51">
        <dbReference type="Rhea" id="RHEA:70568"/>
    </physiologicalReaction>
</comment>
<comment type="catalytic activity">
    <reaction evidence="50">
        <text>N(6)-hexadecanoyl-L-lysyl-[protein] + NAD(+) + H2O = 2''-O-hexadecanoyl-ADP-D-ribose + nicotinamide + L-lysyl-[protein]</text>
        <dbReference type="Rhea" id="RHEA:70563"/>
        <dbReference type="Rhea" id="RHEA-COMP:9752"/>
        <dbReference type="Rhea" id="RHEA-COMP:14175"/>
        <dbReference type="ChEBI" id="CHEBI:15377"/>
        <dbReference type="ChEBI" id="CHEBI:17154"/>
        <dbReference type="ChEBI" id="CHEBI:29969"/>
        <dbReference type="ChEBI" id="CHEBI:57540"/>
        <dbReference type="ChEBI" id="CHEBI:138936"/>
        <dbReference type="ChEBI" id="CHEBI:189673"/>
    </reaction>
    <physiologicalReaction direction="left-to-right" evidence="50">
        <dbReference type="Rhea" id="RHEA:70564"/>
    </physiologicalReaction>
</comment>
<comment type="cofactor">
    <cofactor evidence="47 48">
        <name>Zn(2+)</name>
        <dbReference type="ChEBI" id="CHEBI:29105"/>
    </cofactor>
    <text evidence="47 48">Binds 1 zinc ion per subunit.</text>
</comment>
<comment type="activity regulation">
    <text evidence="9 25 43">Inhibited by Sirtinol, A3 and M15 small molecules (PubMed:11483616). Inhibited by nicotinamide. Inhibited by a macrocyclic peptide inhibitor S2iL5 (PubMed:24389023). Inhibited by EP300-induced acetylation (PubMed:18722353).</text>
</comment>
<comment type="biophysicochemical properties">
    <kinetics>
        <KM evidence="48">19 uM for an peptide acetylated on lysine</KM>
        <KM evidence="48">0.24 uM for an peptide myristoylated on lysine</KM>
        <text evidence="48">kcat is 0.275 sec(-1) with a peptide acetylated on lysine as substrate (PubMed:25704306). kcat is 0.018 sec(-1) with a peptide myristoylated on lysine as substrate (PubMed:25704306).</text>
    </kinetics>
</comment>
<comment type="subunit">
    <text evidence="1 3 8 11 14 16 21 22 23 25 28 30 33 37 38 39 42 43 44 45 46 49">Interacts with CDC20, FOXO3 and FZR1. Associates with microtubules in primary cortical mature neurons (By similarity). Homotrimer. Isoform 1 and isoform 2 interact (via both phosphorylated, unphosphorylated, active or inactive forms) with HDAC6; the interaction is necessary for the complex to interact with alpha-tubulin, suggesting that these proteins belong to a large complex that deacetylates the cytoskeleton. Interacts with FOXO1; the interaction is disrupted upon serum-starvation or oxidative stress, leading to increased level of acetylated FOXO1 and induction of autophagy. Interacts with RELA; the interaction occurs in the cytoplasm and is increased in a TNF-alpha-dependent manner. Interacts with HOXA10; the interaction is direct. Interacts with YWHAB and YWHAG; the interactions occur in a AKT-dependent manner and increase SIRT2-dependent TP53 deacetylation. Interacts with MAPK1/ERK2 and MAPK3/ERK1; the interactions increase SIRT2 stability and deacetylation activity. Interacts (phosphorylated form) with KMT5A isoform 2; the interaction is direct, stimulates KMT5A-mediated methyltransferase activity on histone at 'Lys-20' (H4K20me1) and is increased in a H(2)O(2)-induced oxidative stress-dependent manner. Interacts with G6PD; the interaction is enhanced by H(2)O(2) treatment. Interacts with a G1/S-specific cyclin E-CDK2 complex. Interacts with AURKA, CDK5R1 (p35 form) and CDK5 and HIF1A. Isoform 1, isoform 2 and isoform 5 interact (via C-terminus region) with EP300 (PubMed:24177535). Interacts with the tRNA ligase SARS1; recruited to the VEGFA promoter via interaction with SARS1 (PubMed:24940000). Interacts with BEX4; negatively regulates alpha-tubulin deacetylation by SIRT2 (PubMed:27512957).</text>
</comment>
<comment type="interaction">
    <interactant intactId="EBI-477232">
        <id>Q8IXJ6</id>
    </interactant>
    <interactant intactId="EBI-1001438">
        <id>O60566</id>
        <label>BUB1B</label>
    </interactant>
    <organismsDiffer>false</organismsDiffer>
    <experiments>3</experiments>
</comment>
<comment type="interaction">
    <interactant intactId="EBI-477232">
        <id>Q8IXJ6</id>
    </interactant>
    <interactant intactId="EBI-970231">
        <id>O60729</id>
        <label>CDC14B</label>
    </interactant>
    <organismsDiffer>false</organismsDiffer>
    <experiments>2</experiments>
</comment>
<comment type="interaction">
    <interactant intactId="EBI-477232">
        <id>Q8IXJ6</id>
    </interactant>
    <interactant intactId="EBI-4289891">
        <id>P11413</id>
        <label>G6PD</label>
    </interactant>
    <organismsDiffer>false</organismsDiffer>
    <experiments>3</experiments>
</comment>
<comment type="interaction">
    <interactant intactId="EBI-477232">
        <id>Q8IXJ6</id>
    </interactant>
    <interactant intactId="EBI-477430">
        <id>Q92831</id>
        <label>KAT2B</label>
    </interactant>
    <organismsDiffer>false</organismsDiffer>
    <experiments>4</experiments>
</comment>
<comment type="interaction">
    <interactant intactId="EBI-477232">
        <id>Q8IXJ6</id>
    </interactant>
    <interactant intactId="EBI-73886">
        <id>Q04206</id>
        <label>RELA</label>
    </interactant>
    <organismsDiffer>false</organismsDiffer>
    <experiments>2</experiments>
</comment>
<comment type="interaction">
    <interactant intactId="EBI-477232">
        <id>Q8IXJ6</id>
    </interactant>
    <interactant intactId="EBI-1752330">
        <id>Q9BYB0</id>
        <label>SHANK3</label>
    </interactant>
    <organismsDiffer>false</organismsDiffer>
    <experiments>2</experiments>
</comment>
<comment type="interaction">
    <interactant intactId="EBI-5240785">
        <id>Q8IXJ6-2</id>
    </interactant>
    <interactant intactId="EBI-367462">
        <id>Q12834</id>
        <label>CDC20</label>
    </interactant>
    <organismsDiffer>false</organismsDiffer>
    <experiments>2</experiments>
</comment>
<comment type="interaction">
    <interactant intactId="EBI-5240785">
        <id>Q8IXJ6-2</id>
    </interactant>
    <interactant intactId="EBI-724997">
        <id>Q9UM11</id>
        <label>FZR1</label>
    </interactant>
    <organismsDiffer>false</organismsDiffer>
    <experiments>2</experiments>
</comment>
<comment type="subcellular location">
    <subcellularLocation>
        <location evidence="12 15 16 21 28 40 42">Nucleus</location>
    </subcellularLocation>
    <subcellularLocation>
        <location evidence="3">Cytoplasm</location>
        <location evidence="3">Perinuclear region</location>
    </subcellularLocation>
    <subcellularLocation>
        <location evidence="12 15 16 21 28 40 44">Cytoplasm</location>
    </subcellularLocation>
    <subcellularLocation>
        <location evidence="11">Cytoplasm</location>
        <location evidence="11">Cytoskeleton</location>
    </subcellularLocation>
    <subcellularLocation>
        <location evidence="18 21">Cytoplasm</location>
        <location evidence="18 21">Cytoskeleton</location>
        <location evidence="18 21">Microtubule organizing center</location>
        <location evidence="18 21">Centrosome</location>
    </subcellularLocation>
    <subcellularLocation>
        <location evidence="21">Cytoplasm</location>
        <location evidence="21">Cytoskeleton</location>
        <location evidence="21">Microtubule organizing center</location>
        <location evidence="21">Centrosome</location>
        <location evidence="21">Centriole</location>
    </subcellularLocation>
    <subcellularLocation>
        <location evidence="18">Cytoplasm</location>
        <location evidence="18">Cytoskeleton</location>
        <location evidence="18">Spindle</location>
    </subcellularLocation>
    <subcellularLocation>
        <location evidence="21">Midbody</location>
    </subcellularLocation>
    <subcellularLocation>
        <location evidence="16 38">Chromosome</location>
    </subcellularLocation>
    <subcellularLocation>
        <location evidence="3">Perikaryon</location>
    </subcellularLocation>
    <subcellularLocation>
        <location evidence="3">Cell projection</location>
    </subcellularLocation>
    <subcellularLocation>
        <location evidence="3">Cell projection</location>
        <location evidence="3">Growth cone</location>
    </subcellularLocation>
    <subcellularLocation>
        <location evidence="3">Myelin membrane</location>
    </subcellularLocation>
    <text evidence="3 11 18 21 38 40 42">Localizes in the cytoplasm during most of the cell cycle except in the G2/M transition and during mitosis, where it is localized in association with chromatin and induces deacetylation of histone at 'Lys-16' (H4K16ac) (PubMed:17726514, PubMed:23468428). Colocalizes with KMT5A at mitotic foci (PubMed:23468428). Colocalizes with CDK1 at centrosome during prophase and splindle fibers during metaphase (PubMed:17488717). Colocalizes with Aurora kinase AURKA at centrosome during early prophase and in the centrioles and growing mitotic spindle throughout metaphase (PubMed:17488717). Colocalizes with Aurora kinase AURKB during cytokinesis with the midbody (PubMed:17488717). Colocalizes with microtubules (PubMed:12620231). Detected in perinuclear foci that may be aggresomes containing misfolded, ubiquitinated proteins (By similarity). Shuttles between the cytoplasm and the nucleus through the CRM1 export pathway (PubMed:17726514). Colocalizes with EP300 in the nucleus (PubMed:24177535). Translocates to the nucleus and chromatin upon bacterium Listeria monocytogenes infection in interphase cells (PubMed:23908241). Deacetylates FOXO3 in the cytoplasm (By similarity). Colocalizes with PLP1 in internodal regions, at paranodal axoglial junction and Schmidt-Lanterman incisures of myelin sheath (By similarity). Colocalizes with CDK5R1 in the perikaryon, neurites and growth cone of hippocampal neurons (By similarity). Colocalizes with alpha-tubulin in neuronal growth cone (By similarity). Localizes in the cytoplasm and nucleus of germinal vesicle (GV) stage oocytes (By similarity). Colocalizes with alpha-tubulin on the meiotic spindle as the oocytes enter into metaphase, and also during meiotic anaphase and telophase, especially with the midbody (By similarity). Colocalizes with PARD3 in internodal region of axons (By similarity). Colocalizes with acetylated alpha-tubulin in cell projection processes during primary oligodendrocyte precursor (OLP) differentiation (By similarity).</text>
</comment>
<comment type="subcellular location">
    <molecule>Isoform 1</molecule>
    <subcellularLocation>
        <location evidence="42">Cytoplasm</location>
    </subcellularLocation>
    <subcellularLocation>
        <location evidence="42">Nucleus</location>
    </subcellularLocation>
    <text evidence="42">Predominantly localized in the cytoplasmic.</text>
</comment>
<comment type="subcellular location">
    <molecule>Isoform 2</molecule>
    <subcellularLocation>
        <location evidence="42">Cytoplasm</location>
    </subcellularLocation>
    <subcellularLocation>
        <location evidence="42">Nucleus</location>
    </subcellularLocation>
    <text evidence="42">Predominantly localized in the cytoplasmic.</text>
</comment>
<comment type="subcellular location">
    <molecule>Isoform 5</molecule>
    <subcellularLocation>
        <location evidence="42">Cytoplasm</location>
    </subcellularLocation>
    <subcellularLocation>
        <location evidence="42">Nucleus</location>
    </subcellularLocation>
    <text evidence="42">Predominantly localized in the nucleus.</text>
</comment>
<comment type="alternative products">
    <event type="alternative splicing"/>
    <isoform>
        <id>Q8IXJ6-1</id>
        <name>1</name>
        <sequence type="displayed"/>
    </isoform>
    <isoform>
        <id>Q8IXJ6-2</id>
        <name>2</name>
        <sequence type="described" ref="VSP_008724"/>
    </isoform>
    <isoform>
        <id>Q8IXJ6-3</id>
        <name>3</name>
        <sequence type="described" ref="VSP_008726"/>
    </isoform>
    <isoform>
        <id>Q8IXJ6-4</id>
        <name>4</name>
        <sequence type="described" ref="VSP_008727 VSP_008728"/>
    </isoform>
    <isoform>
        <id>Q8IXJ6-5</id>
        <name>5</name>
        <sequence type="described" ref="VSP_055328"/>
    </isoform>
</comment>
<comment type="tissue specificity">
    <text evidence="6 7 13 17 32 34">Isoform 1 is expressed in heart, liver and skeletal muscle, weakly expressed in the cortex. Isoform 2 is strongly expressed in the cortex, weakly expressed in heart and liver. Weakly expressed in several malignancies including breast, liver, brain, kidney and prostate cancers compared to normal tissues. Weakly expressed in glioma cell lines compared to normal brain tissues (at protein level). Widely expressed. Highly expressed in heart, brain and skeletal muscle, while it is weakly expressed in placenta and lung. Down-regulated in many gliomas suggesting that it may act as a tumor suppressor gene in human gliomas possibly through the regulation of microtubule network.</text>
</comment>
<comment type="developmental stage">
    <text evidence="12">Peaks during mitosis. After mitosis, it is probably degraded by the 26S proteasome.</text>
</comment>
<comment type="induction">
    <text evidence="17 24 31">Up-regulated in response to low levels of glucose and anoxia-reoxygenation stress. Up-regulated by trichostatin A. Down-regulated in response to high levels of glucose. Down-regulated by histone deacetylation in several tumors.</text>
</comment>
<comment type="PTM">
    <text evidence="12 18 19 23">Phosphorylated at phosphoserine and phosphothreonine. Phosphorylated at Ser-368 by a mitotic kinase CDK1/cyclin B at the G2/M transition; phosphorylation regulates the delay in cell-cycle progression. Phosphorylated at Ser-368 by a mitotic kinase G1/S-specific cyclin E/Cdk2 complex; phosphorylation inactivates SIRT2-mediated alpha-tubulin deacetylation and thereby negatively regulates cell adhesion, cell migration and neurite outgrowth during neuronal differentiation. Phosphorylated by cyclin A/Cdk2 and p35-Cdk5 complexes and to a lesser extent by the cyclin D3/Cdk4 and cyclin B/Cdk1, in vitro. Dephosphorylated at Ser-368 by CDC14A and CDC14B around early anaphase.</text>
</comment>
<comment type="PTM">
    <text evidence="25">Acetylated by EP300; acetylation leads both to the decreased of SIRT2-mediated alpha-tubulin deacetylase activity and SIRT2-mediated down-regulation of TP53 transcriptional activity.</text>
</comment>
<comment type="PTM">
    <text evidence="12 19">Ubiquitinated.</text>
</comment>
<comment type="similarity">
    <text evidence="60">Belongs to the sirtuin family. Class I subfamily.</text>
</comment>
<comment type="sequence caution" evidence="60">
    <conflict type="erroneous initiation">
        <sequence resource="EMBL-CDS" id="AAD45971"/>
    </conflict>
</comment>
<comment type="sequence caution" evidence="60">
    <conflict type="frameshift">
        <sequence resource="EMBL-CDS" id="AAF67015"/>
    </conflict>
</comment>
<protein>
    <recommendedName>
        <fullName>NAD-dependent protein deacetylase sirtuin-2</fullName>
        <ecNumber evidence="4 9 10 16 25 42">2.3.1.286</ecNumber>
    </recommendedName>
    <alternativeName>
        <fullName evidence="60">NAD-dependent protein defatty-acylase sirtuin-2</fullName>
        <ecNumber evidence="48 50 51">2.3.1.-</ecNumber>
    </alternativeName>
    <alternativeName>
        <fullName>Regulatory protein SIR2 homolog 2</fullName>
    </alternativeName>
    <alternativeName>
        <fullName>SIR2-like protein 2</fullName>
    </alternativeName>
</protein>
<sequence length="389" mass="43182">MAEPDPSHPLETQAGKVQEAQDSDSDSEGGAAGGEADMDFLRNLFSQTLSLGSQKERLLDELTLEGVARYMQSERCRRVICLVGAGISTSAGIPDFRSPSTGLYDNLEKYHLPYPEAIFEISYFKKHPEPFFALAKELYPGQFKPTICHYFMRLLKDKGLLLRCYTQNIDTLERIAGLEQEDLVEAHGTFYTSHCVSASCRHEYPLSWMKEKIFSEVTPKCEDCQSLVKPDIVFFGESLPARFFSCMQSDFLKVDLLLVMGTSLQVQPFASLISKAPLSTPRLLINKEKAGQSDPFLGMIMGLGGGMDFDSKKAYRDVAWLGECDQGCLALAELLGWKKELEDLVRREHASIDAQSGAGVPNPSTSASPKKSPPPAKDEARTTEREKPQ</sequence>
<gene>
    <name type="primary">SIRT2</name>
    <name type="synonym">SIR2L</name>
    <name type="synonym">SIR2L2</name>
</gene>
<keyword id="KW-0002">3D-structure</keyword>
<keyword id="KW-0007">Acetylation</keyword>
<keyword id="KW-0025">Alternative splicing</keyword>
<keyword id="KW-0072">Autophagy</keyword>
<keyword id="KW-0131">Cell cycle</keyword>
<keyword id="KW-0132">Cell division</keyword>
<keyword id="KW-1003">Cell membrane</keyword>
<keyword id="KW-0966">Cell projection</keyword>
<keyword id="KW-0158">Chromosome</keyword>
<keyword id="KW-0963">Cytoplasm</keyword>
<keyword id="KW-0206">Cytoskeleton</keyword>
<keyword id="KW-0221">Differentiation</keyword>
<keyword id="KW-0391">Immunity</keyword>
<keyword id="KW-0399">Innate immunity</keyword>
<keyword id="KW-0469">Meiosis</keyword>
<keyword id="KW-0472">Membrane</keyword>
<keyword id="KW-0479">Metal-binding</keyword>
<keyword id="KW-0493">Microtubule</keyword>
<keyword id="KW-0498">Mitosis</keyword>
<keyword id="KW-0520">NAD</keyword>
<keyword id="KW-0523">Neurodegeneration</keyword>
<keyword id="KW-0524">Neurogenesis</keyword>
<keyword id="KW-0539">Nucleus</keyword>
<keyword id="KW-0597">Phosphoprotein</keyword>
<keyword id="KW-1267">Proteomics identification</keyword>
<keyword id="KW-1185">Reference proteome</keyword>
<keyword id="KW-0804">Transcription</keyword>
<keyword id="KW-0805">Transcription regulation</keyword>
<keyword id="KW-0808">Transferase</keyword>
<keyword id="KW-0832">Ubl conjugation</keyword>
<keyword id="KW-0862">Zinc</keyword>
<evidence type="ECO:0000250" key="1"/>
<evidence type="ECO:0000250" key="2">
    <source>
        <dbReference type="UniProtKB" id="Q5RJQ4"/>
    </source>
</evidence>
<evidence type="ECO:0000250" key="3">
    <source>
        <dbReference type="UniProtKB" id="Q8VDQ8"/>
    </source>
</evidence>
<evidence type="ECO:0000255" key="4">
    <source>
        <dbReference type="PROSITE-ProRule" id="PRU00236"/>
    </source>
</evidence>
<evidence type="ECO:0000256" key="5">
    <source>
        <dbReference type="SAM" id="MobiDB-lite"/>
    </source>
</evidence>
<evidence type="ECO:0000269" key="6">
    <source>
    </source>
</evidence>
<evidence type="ECO:0000269" key="7">
    <source>
    </source>
</evidence>
<evidence type="ECO:0000269" key="8">
    <source>
    </source>
</evidence>
<evidence type="ECO:0000269" key="9">
    <source>
    </source>
</evidence>
<evidence type="ECO:0000269" key="10">
    <source>
    </source>
</evidence>
<evidence type="ECO:0000269" key="11">
    <source>
    </source>
</evidence>
<evidence type="ECO:0000269" key="12">
    <source>
    </source>
</evidence>
<evidence type="ECO:0000269" key="13">
    <source>
    </source>
</evidence>
<evidence type="ECO:0000269" key="14">
    <source>
    </source>
</evidence>
<evidence type="ECO:0000269" key="15">
    <source>
    </source>
</evidence>
<evidence type="ECO:0000269" key="16">
    <source>
    </source>
</evidence>
<evidence type="ECO:0000269" key="17">
    <source>
    </source>
</evidence>
<evidence type="ECO:0000269" key="18">
    <source>
    </source>
</evidence>
<evidence type="ECO:0000269" key="19">
    <source>
    </source>
</evidence>
<evidence type="ECO:0000269" key="20">
    <source>
    </source>
</evidence>
<evidence type="ECO:0000269" key="21">
    <source>
    </source>
</evidence>
<evidence type="ECO:0000269" key="22">
    <source>
    </source>
</evidence>
<evidence type="ECO:0000269" key="23">
    <source>
    </source>
</evidence>
<evidence type="ECO:0000269" key="24">
    <source>
    </source>
</evidence>
<evidence type="ECO:0000269" key="25">
    <source>
    </source>
</evidence>
<evidence type="ECO:0000269" key="26">
    <source>
    </source>
</evidence>
<evidence type="ECO:0000269" key="27">
    <source>
    </source>
</evidence>
<evidence type="ECO:0000269" key="28">
    <source>
    </source>
</evidence>
<evidence type="ECO:0000269" key="29">
    <source>
    </source>
</evidence>
<evidence type="ECO:0000269" key="30">
    <source>
    </source>
</evidence>
<evidence type="ECO:0000269" key="31">
    <source>
    </source>
</evidence>
<evidence type="ECO:0000269" key="32">
    <source>
    </source>
</evidence>
<evidence type="ECO:0000269" key="33">
    <source>
    </source>
</evidence>
<evidence type="ECO:0000269" key="34">
    <source>
    </source>
</evidence>
<evidence type="ECO:0000269" key="35">
    <source>
    </source>
</evidence>
<evidence type="ECO:0000269" key="36">
    <source>
    </source>
</evidence>
<evidence type="ECO:0000269" key="37">
    <source>
    </source>
</evidence>
<evidence type="ECO:0000269" key="38">
    <source>
    </source>
</evidence>
<evidence type="ECO:0000269" key="39">
    <source>
    </source>
</evidence>
<evidence type="ECO:0000269" key="40">
    <source>
    </source>
</evidence>
<evidence type="ECO:0000269" key="41">
    <source>
    </source>
</evidence>
<evidence type="ECO:0000269" key="42">
    <source>
    </source>
</evidence>
<evidence type="ECO:0000269" key="43">
    <source>
    </source>
</evidence>
<evidence type="ECO:0000269" key="44">
    <source>
    </source>
</evidence>
<evidence type="ECO:0000269" key="45">
    <source>
    </source>
</evidence>
<evidence type="ECO:0000269" key="46">
    <source>
    </source>
</evidence>
<evidence type="ECO:0000269" key="47">
    <source>
    </source>
</evidence>
<evidence type="ECO:0000269" key="48">
    <source>
    </source>
</evidence>
<evidence type="ECO:0000269" key="49">
    <source>
    </source>
</evidence>
<evidence type="ECO:0000269" key="50">
    <source>
    </source>
</evidence>
<evidence type="ECO:0000269" key="51">
    <source>
    </source>
</evidence>
<evidence type="ECO:0000303" key="52">
    <source>
    </source>
</evidence>
<evidence type="ECO:0000303" key="53">
    <source>
    </source>
</evidence>
<evidence type="ECO:0000303" key="54">
    <source>
    </source>
</evidence>
<evidence type="ECO:0000303" key="55">
    <source>
    </source>
</evidence>
<evidence type="ECO:0000303" key="56">
    <source>
    </source>
</evidence>
<evidence type="ECO:0000303" key="57">
    <source>
    </source>
</evidence>
<evidence type="ECO:0000303" key="58">
    <source ref="10"/>
</evidence>
<evidence type="ECO:0000303" key="59">
    <source ref="5"/>
</evidence>
<evidence type="ECO:0000305" key="60"/>
<evidence type="ECO:0007744" key="61">
    <source>
        <dbReference type="PDB" id="4L3O"/>
    </source>
</evidence>
<evidence type="ECO:0007744" key="62">
    <source>
        <dbReference type="PDB" id="4R8M"/>
    </source>
</evidence>
<evidence type="ECO:0007744" key="63">
    <source>
        <dbReference type="PDB" id="4RMG"/>
    </source>
</evidence>
<evidence type="ECO:0007744" key="64">
    <source>
        <dbReference type="PDB" id="4RMH"/>
    </source>
</evidence>
<evidence type="ECO:0007744" key="65">
    <source>
        <dbReference type="PDB" id="4RMI"/>
    </source>
</evidence>
<evidence type="ECO:0007744" key="66">
    <source>
        <dbReference type="PDB" id="4RMJ"/>
    </source>
</evidence>
<evidence type="ECO:0007744" key="67">
    <source>
    </source>
</evidence>
<evidence type="ECO:0007744" key="68">
    <source>
    </source>
</evidence>
<evidence type="ECO:0007744" key="69">
    <source>
    </source>
</evidence>
<evidence type="ECO:0007829" key="70">
    <source>
        <dbReference type="PDB" id="3ZGO"/>
    </source>
</evidence>
<evidence type="ECO:0007829" key="71">
    <source>
        <dbReference type="PDB" id="4RMH"/>
    </source>
</evidence>
<evidence type="ECO:0007829" key="72">
    <source>
        <dbReference type="PDB" id="4RMI"/>
    </source>
</evidence>
<evidence type="ECO:0007829" key="73">
    <source>
        <dbReference type="PDB" id="4X3O"/>
    </source>
</evidence>
<evidence type="ECO:0007829" key="74">
    <source>
        <dbReference type="PDB" id="5DY4"/>
    </source>
</evidence>
<evidence type="ECO:0007829" key="75">
    <source>
        <dbReference type="PDB" id="5Y0Z"/>
    </source>
</evidence>
<evidence type="ECO:0007829" key="76">
    <source>
        <dbReference type="PDB" id="6L66"/>
    </source>
</evidence>
<reference key="1">
    <citation type="journal article" date="1999" name="Biochem. Biophys. Res. Commun.">
        <title>Characterization of five human cDNAs with homology to the yeast SIR2 gene: Sir2-like proteins (sirtuins) metabolize NAD and may have protein ADP-ribosyltransferase activity.</title>
        <authorList>
            <person name="Frye R.A."/>
        </authorList>
    </citation>
    <scope>NUCLEOTIDE SEQUENCE [MRNA] (ISOFORM 1)</scope>
    <scope>TISSUE SPECIFICITY</scope>
    <scope>MUTAGENESIS OF HIS-187</scope>
    <source>
        <tissue>Testis</tissue>
    </source>
</reference>
<reference key="2">
    <citation type="journal article" date="1999" name="Gene">
        <title>Characterization of a human gene with sequence homology to Saccharomyces cerevisiae SIR2.</title>
        <authorList>
            <person name="Afshar G."/>
            <person name="Murnane J.P."/>
        </authorList>
    </citation>
    <scope>NUCLEOTIDE SEQUENCE [MRNA] (ISOFORM 2)</scope>
    <scope>SUBCELLULAR LOCATION</scope>
    <scope>TISSUE SPECIFICITY</scope>
</reference>
<reference key="3">
    <citation type="journal article" date="2002" name="J. Neurochem.">
        <title>A novel seven transmembrane receptor induced during the early steps of astrocyte differentiation identified by differential expression.</title>
        <authorList>
            <person name="De Smet C."/>
            <person name="Nishimori H."/>
            <person name="Furnari F.B."/>
            <person name="Boegler O."/>
            <person name="Huang H.-J.S."/>
            <person name="Cavenee W.K."/>
        </authorList>
    </citation>
    <scope>NUCLEOTIDE SEQUENCE [MRNA] (ISOFORM 2)</scope>
</reference>
<reference key="4">
    <citation type="journal article" date="2014" name="J. Mol. Biol.">
        <title>Constitutive nuclear localization of an alternatively spliced sirtuin-2 isoform.</title>
        <authorList>
            <person name="Rack J.G."/>
            <person name="Vanlinden M.R."/>
            <person name="Lutter T."/>
            <person name="Aasland R."/>
            <person name="Ziegler M."/>
        </authorList>
    </citation>
    <scope>NUCLEOTIDE SEQUENCE [MRNA] (ISOFORM 5)</scope>
    <scope>ALTERNATIVE SPLICING (ISOFORMS 1 AND 2)</scope>
    <scope>FUNCTION IN DEACETYLATION (ISOFORMS 1 AND 2)</scope>
    <scope>CATALYTIC ACTIVITY</scope>
    <scope>LACK OF DEACETYLATION (ISOFORM 5)</scope>
    <scope>INTERACTION WITH EP300 (ISOFORMS 1; 2 AND 5)</scope>
    <scope>SUBCELLULAR LOCATION (ISOFORMS 1; 2 AND 5)</scope>
</reference>
<reference key="5">
    <citation type="submission" date="2002-08" db="EMBL/GenBank/DDBJ databases">
        <title>Response of autologous T cells to a human melanoma is dominated by individual mutant antigens.</title>
        <authorList>
            <person name="Lennerz V."/>
            <person name="Fatho M."/>
            <person name="Gentilini C."/>
            <person name="Lifke A."/>
            <person name="Woelfel C."/>
            <person name="Woelfel T."/>
        </authorList>
    </citation>
    <scope>NUCLEOTIDE SEQUENCE [MRNA] (ISOFORM 3)</scope>
</reference>
<reference key="6">
    <citation type="journal article" date="2000" name="Proc. Natl. Acad. Sci. U.S.A.">
        <title>Gene expression profiling in the human hypothalamus-pituitary-adrenal axis and full-length cDNA cloning.</title>
        <authorList>
            <person name="Hu R.-M."/>
            <person name="Han Z.-G."/>
            <person name="Song H.-D."/>
            <person name="Peng Y.-D."/>
            <person name="Huang Q.-H."/>
            <person name="Ren S.-X."/>
            <person name="Gu Y.-J."/>
            <person name="Huang C.-H."/>
            <person name="Li Y.-B."/>
            <person name="Jiang C.-L."/>
            <person name="Fu G."/>
            <person name="Zhang Q.-H."/>
            <person name="Gu B.-W."/>
            <person name="Dai M."/>
            <person name="Mao Y.-F."/>
            <person name="Gao G.-F."/>
            <person name="Rong R."/>
            <person name="Ye M."/>
            <person name="Zhou J."/>
            <person name="Xu S.-H."/>
            <person name="Gu J."/>
            <person name="Shi J.-X."/>
            <person name="Jin W.-R."/>
            <person name="Zhang C.-K."/>
            <person name="Wu T.-M."/>
            <person name="Huang G.-Y."/>
            <person name="Chen Z."/>
            <person name="Chen M.-D."/>
            <person name="Chen J.-L."/>
        </authorList>
    </citation>
    <scope>NUCLEOTIDE SEQUENCE [LARGE SCALE MRNA] (ISOFORM 2)</scope>
    <source>
        <tissue>Adrenal gland</tissue>
    </source>
</reference>
<reference key="7">
    <citation type="journal article" date="2004" name="Nat. Genet.">
        <title>Complete sequencing and characterization of 21,243 full-length human cDNAs.</title>
        <authorList>
            <person name="Ota T."/>
            <person name="Suzuki Y."/>
            <person name="Nishikawa T."/>
            <person name="Otsuki T."/>
            <person name="Sugiyama T."/>
            <person name="Irie R."/>
            <person name="Wakamatsu A."/>
            <person name="Hayashi K."/>
            <person name="Sato H."/>
            <person name="Nagai K."/>
            <person name="Kimura K."/>
            <person name="Makita H."/>
            <person name="Sekine M."/>
            <person name="Obayashi M."/>
            <person name="Nishi T."/>
            <person name="Shibahara T."/>
            <person name="Tanaka T."/>
            <person name="Ishii S."/>
            <person name="Yamamoto J."/>
            <person name="Saito K."/>
            <person name="Kawai Y."/>
            <person name="Isono Y."/>
            <person name="Nakamura Y."/>
            <person name="Nagahari K."/>
            <person name="Murakami K."/>
            <person name="Yasuda T."/>
            <person name="Iwayanagi T."/>
            <person name="Wagatsuma M."/>
            <person name="Shiratori A."/>
            <person name="Sudo H."/>
            <person name="Hosoiri T."/>
            <person name="Kaku Y."/>
            <person name="Kodaira H."/>
            <person name="Kondo H."/>
            <person name="Sugawara M."/>
            <person name="Takahashi M."/>
            <person name="Kanda K."/>
            <person name="Yokoi T."/>
            <person name="Furuya T."/>
            <person name="Kikkawa E."/>
            <person name="Omura Y."/>
            <person name="Abe K."/>
            <person name="Kamihara K."/>
            <person name="Katsuta N."/>
            <person name="Sato K."/>
            <person name="Tanikawa M."/>
            <person name="Yamazaki M."/>
            <person name="Ninomiya K."/>
            <person name="Ishibashi T."/>
            <person name="Yamashita H."/>
            <person name="Murakawa K."/>
            <person name="Fujimori K."/>
            <person name="Tanai H."/>
            <person name="Kimata M."/>
            <person name="Watanabe M."/>
            <person name="Hiraoka S."/>
            <person name="Chiba Y."/>
            <person name="Ishida S."/>
            <person name="Ono Y."/>
            <person name="Takiguchi S."/>
            <person name="Watanabe S."/>
            <person name="Yosida M."/>
            <person name="Hotuta T."/>
            <person name="Kusano J."/>
            <person name="Kanehori K."/>
            <person name="Takahashi-Fujii A."/>
            <person name="Hara H."/>
            <person name="Tanase T.-O."/>
            <person name="Nomura Y."/>
            <person name="Togiya S."/>
            <person name="Komai F."/>
            <person name="Hara R."/>
            <person name="Takeuchi K."/>
            <person name="Arita M."/>
            <person name="Imose N."/>
            <person name="Musashino K."/>
            <person name="Yuuki H."/>
            <person name="Oshima A."/>
            <person name="Sasaki N."/>
            <person name="Aotsuka S."/>
            <person name="Yoshikawa Y."/>
            <person name="Matsunawa H."/>
            <person name="Ichihara T."/>
            <person name="Shiohata N."/>
            <person name="Sano S."/>
            <person name="Moriya S."/>
            <person name="Momiyama H."/>
            <person name="Satoh N."/>
            <person name="Takami S."/>
            <person name="Terashima Y."/>
            <person name="Suzuki O."/>
            <person name="Nakagawa S."/>
            <person name="Senoh A."/>
            <person name="Mizoguchi H."/>
            <person name="Goto Y."/>
            <person name="Shimizu F."/>
            <person name="Wakebe H."/>
            <person name="Hishigaki H."/>
            <person name="Watanabe T."/>
            <person name="Sugiyama A."/>
            <person name="Takemoto M."/>
            <person name="Kawakami B."/>
            <person name="Yamazaki M."/>
            <person name="Watanabe K."/>
            <person name="Kumagai A."/>
            <person name="Itakura S."/>
            <person name="Fukuzumi Y."/>
            <person name="Fujimori Y."/>
            <person name="Komiyama M."/>
            <person name="Tashiro H."/>
            <person name="Tanigami A."/>
            <person name="Fujiwara T."/>
            <person name="Ono T."/>
            <person name="Yamada K."/>
            <person name="Fujii Y."/>
            <person name="Ozaki K."/>
            <person name="Hirao M."/>
            <person name="Ohmori Y."/>
            <person name="Kawabata A."/>
            <person name="Hikiji T."/>
            <person name="Kobatake N."/>
            <person name="Inagaki H."/>
            <person name="Ikema Y."/>
            <person name="Okamoto S."/>
            <person name="Okitani R."/>
            <person name="Kawakami T."/>
            <person name="Noguchi S."/>
            <person name="Itoh T."/>
            <person name="Shigeta K."/>
            <person name="Senba T."/>
            <person name="Matsumura K."/>
            <person name="Nakajima Y."/>
            <person name="Mizuno T."/>
            <person name="Morinaga M."/>
            <person name="Sasaki M."/>
            <person name="Togashi T."/>
            <person name="Oyama M."/>
            <person name="Hata H."/>
            <person name="Watanabe M."/>
            <person name="Komatsu T."/>
            <person name="Mizushima-Sugano J."/>
            <person name="Satoh T."/>
            <person name="Shirai Y."/>
            <person name="Takahashi Y."/>
            <person name="Nakagawa K."/>
            <person name="Okumura K."/>
            <person name="Nagase T."/>
            <person name="Nomura N."/>
            <person name="Kikuchi H."/>
            <person name="Masuho Y."/>
            <person name="Yamashita R."/>
            <person name="Nakai K."/>
            <person name="Yada T."/>
            <person name="Nakamura Y."/>
            <person name="Ohara O."/>
            <person name="Isogai T."/>
            <person name="Sugano S."/>
        </authorList>
    </citation>
    <scope>NUCLEOTIDE SEQUENCE [LARGE SCALE MRNA] (ISOFORMS 1 AND 2)</scope>
    <source>
        <tissue>Brain</tissue>
        <tissue>Lung</tissue>
    </source>
</reference>
<reference key="8">
    <citation type="submission" date="2005-07" db="EMBL/GenBank/DDBJ databases">
        <authorList>
            <person name="Mural R.J."/>
            <person name="Istrail S."/>
            <person name="Sutton G.G."/>
            <person name="Florea L."/>
            <person name="Halpern A.L."/>
            <person name="Mobarry C.M."/>
            <person name="Lippert R."/>
            <person name="Walenz B."/>
            <person name="Shatkay H."/>
            <person name="Dew I."/>
            <person name="Miller J.R."/>
            <person name="Flanigan M.J."/>
            <person name="Edwards N.J."/>
            <person name="Bolanos R."/>
            <person name="Fasulo D."/>
            <person name="Halldorsson B.V."/>
            <person name="Hannenhalli S."/>
            <person name="Turner R."/>
            <person name="Yooseph S."/>
            <person name="Lu F."/>
            <person name="Nusskern D.R."/>
            <person name="Shue B.C."/>
            <person name="Zheng X.H."/>
            <person name="Zhong F."/>
            <person name="Delcher A.L."/>
            <person name="Huson D.H."/>
            <person name="Kravitz S.A."/>
            <person name="Mouchard L."/>
            <person name="Reinert K."/>
            <person name="Remington K.A."/>
            <person name="Clark A.G."/>
            <person name="Waterman M.S."/>
            <person name="Eichler E.E."/>
            <person name="Adams M.D."/>
            <person name="Hunkapiller M.W."/>
            <person name="Myers E.W."/>
            <person name="Venter J.C."/>
        </authorList>
    </citation>
    <scope>NUCLEOTIDE SEQUENCE [LARGE SCALE GENOMIC DNA]</scope>
</reference>
<reference key="9">
    <citation type="journal article" date="2004" name="Genome Res.">
        <title>The status, quality, and expansion of the NIH full-length cDNA project: the Mammalian Gene Collection (MGC).</title>
        <authorList>
            <consortium name="The MGC Project Team"/>
        </authorList>
    </citation>
    <scope>NUCLEOTIDE SEQUENCE [LARGE SCALE MRNA] (ISOFORM 2)</scope>
    <source>
        <tissue>Lung</tissue>
    </source>
</reference>
<reference key="10">
    <citation type="submission" date="1999-02" db="EMBL/GenBank/DDBJ databases">
        <authorList>
            <person name="Mei G."/>
            <person name="Yu W."/>
            <person name="Gibbs R.A."/>
        </authorList>
    </citation>
    <scope>NUCLEOTIDE SEQUENCE [LARGE SCALE MRNA] OF 22-389 (ISOFORM 4)</scope>
    <source>
        <tissue>Brain</tissue>
    </source>
</reference>
<reference key="11">
    <citation type="journal article" date="2001" name="EMBO J.">
        <title>A cytosolic NAD-dependent deacetylase, Hst2p, can modulate nucleolar and telomeric silencing in yeast.</title>
        <authorList>
            <person name="Perrod S."/>
            <person name="Cockell M.M."/>
            <person name="Laroche T."/>
            <person name="Renauld H."/>
            <person name="Ducrest A.L."/>
            <person name="Bonnard C."/>
            <person name="Gasser S.M."/>
        </authorList>
    </citation>
    <scope>SUBCELLULAR LOCATION</scope>
</reference>
<reference key="12">
    <citation type="journal article" date="2001" name="J. Biol. Chem.">
        <title>Identification of a class of small molecule inhibitors of the sirtuin family of NAD-dependent deacetylases by phenotypic screening.</title>
        <authorList>
            <person name="Grozinger C.M."/>
            <person name="Chao E.D."/>
            <person name="Blackwell H.E."/>
            <person name="Moazed D."/>
            <person name="Schreiber S.L."/>
        </authorList>
    </citation>
    <scope>INHIBITION BY SIRTINOL; A3 AND M15</scope>
    <scope>CATALYTIC ACTIVITY</scope>
    <scope>ACTIVITY REGULATION</scope>
</reference>
<reference key="13">
    <citation type="journal article" date="2002" name="J. Biol. Chem.">
        <title>Conserved enzymatic production and biological effect of O-acetyl-ADP-ribose by silent information regulator 2-like NAD+-dependent deacetylases.</title>
        <authorList>
            <person name="Borra M.T."/>
            <person name="O'Neill F.J."/>
            <person name="Jackson M.D."/>
            <person name="Marshall B.L."/>
            <person name="Verdin E."/>
            <person name="Foltz K.R."/>
            <person name="Denu J.M."/>
        </authorList>
    </citation>
    <scope>CATALYTIC ACTIVITY</scope>
    <scope>MUTAGENESIS OF HIS-187</scope>
</reference>
<reference key="14">
    <citation type="journal article" date="2003" name="Mol. Cell">
        <title>The human Sir2 ortholog, SIRT2, is an NAD+-dependent tubulin deacetylase.</title>
        <authorList>
            <person name="North B.J."/>
            <person name="Marshall B.L."/>
            <person name="Borra M.T."/>
            <person name="Denu J.M."/>
            <person name="Verdin E."/>
        </authorList>
    </citation>
    <scope>FUNCTION IN DEACETYLATION OF TUBULIN</scope>
    <scope>SUBCELLULAR LOCATION</scope>
    <scope>INTERACTION WITH HDAC6</scope>
    <scope>MUTAGENESIS OF ASN-168 AND HIS-187</scope>
</reference>
<reference key="15">
    <citation type="journal article" date="2003" name="Mol. Cell. Biol.">
        <title>Role for human SIRT2 NAD-dependent deacetylase activity in control of mitotic exit in the cell cycle.</title>
        <authorList>
            <person name="Dryden S.C."/>
            <person name="Nahhas F.A."/>
            <person name="Nowak J.E."/>
            <person name="Goustin A.-S."/>
            <person name="Tainsky M.A."/>
        </authorList>
    </citation>
    <scope>FUNCTION AS REGULATOR OF CELL CYCLE PROGRESSION</scope>
    <scope>SUBCELLULAR LOCATION</scope>
    <scope>DEVELOPMENTAL STAGE</scope>
    <scope>PHOSPHORYLATION</scope>
    <scope>UBIQUITINATION</scope>
    <scope>MUTAGENESIS OF HIS-187</scope>
</reference>
<reference key="16">
    <citation type="journal article" date="2003" name="Biochem. Biophys. Res. Commun.">
        <title>Proteomics-based identification of differentially expressed genes in human gliomas: down-regulation of SIRT2 gene.</title>
        <authorList>
            <person name="Hiratsuka M."/>
            <person name="Inoue T."/>
            <person name="Toda T."/>
            <person name="Kimura N."/>
            <person name="Shirayoshi Y."/>
            <person name="Kamitani H."/>
            <person name="Watanabe T."/>
            <person name="Ohama E."/>
            <person name="Tahimic C.G.T."/>
            <person name="Kurimasa A."/>
            <person name="Oshimura M."/>
        </authorList>
    </citation>
    <scope>TISSUE SPECIFICITY</scope>
</reference>
<reference key="17">
    <citation type="journal article" date="2004" name="J. Biochem.">
        <title>Human histone deacetylase SIRT2 interacts with the homeobox transcription factor HOXA10.</title>
        <authorList>
            <person name="Bae N.S."/>
            <person name="Swanson M.J."/>
            <person name="Vassilev A."/>
            <person name="Howard B.H."/>
        </authorList>
    </citation>
    <scope>INTERACTION WITH HOXA10</scope>
</reference>
<reference key="18">
    <citation type="journal article" date="2005" name="Mol. Biol. Cell">
        <title>Evolutionarily conserved and nonconserved cellular localizations and functions of human SIRT proteins.</title>
        <authorList>
            <person name="Michishita E."/>
            <person name="Park J.Y."/>
            <person name="Burneskis J.M."/>
            <person name="Barrett J.C."/>
            <person name="Horikawa I."/>
        </authorList>
    </citation>
    <scope>SUBCELLULAR LOCATION</scope>
</reference>
<reference key="19">
    <citation type="journal article" date="2006" name="Cell">
        <title>Global, in vivo, and site-specific phosphorylation dynamics in signaling networks.</title>
        <authorList>
            <person name="Olsen J.V."/>
            <person name="Blagoev B."/>
            <person name="Gnad F."/>
            <person name="Macek B."/>
            <person name="Kumar C."/>
            <person name="Mortensen P."/>
            <person name="Mann M."/>
        </authorList>
    </citation>
    <scope>IDENTIFICATION BY MASS SPECTROMETRY [LARGE SCALE ANALYSIS]</scope>
    <source>
        <tissue>Cervix carcinoma</tissue>
    </source>
</reference>
<reference key="20">
    <citation type="journal article" date="2006" name="Genes Dev.">
        <title>SirT2 is a histone deacetylase with preference for histone H4 Lys 16 during mitosis.</title>
        <authorList>
            <person name="Vaquero A."/>
            <person name="Scher M.B."/>
            <person name="Lee D.H."/>
            <person name="Sutton A."/>
            <person name="Cheng H.L."/>
            <person name="Alt F.W."/>
            <person name="Serrano L."/>
            <person name="Sternglanz R."/>
            <person name="Reinberg D."/>
        </authorList>
    </citation>
    <scope>FUNCTION IN DEACETYLATION OF HISTONE H4 AND H3</scope>
    <scope>CATALYTIC ACTIVITY</scope>
    <scope>SUBUNIT</scope>
    <scope>SUBCELLULAR LOCATION</scope>
</reference>
<reference key="21">
    <citation type="journal article" date="2007" name="J. Biol. Chem.">
        <title>Mitotic regulation of SIRT2 by cyclin-dependent kinase 1-dependent phosphorylation.</title>
        <authorList>
            <person name="North B.J."/>
            <person name="Verdin E."/>
        </authorList>
    </citation>
    <scope>FUNCTION AS REGULATOR IN CELL CYCLE PROGRESSION</scope>
    <scope>PHOSPHORYLATION AT SER-368 BY CDK1</scope>
    <scope>DEPHOSPHORYLATION AT SER-368 BY CDC14A AND CDC14B</scope>
    <scope>SUBCELLULAR LOCATION</scope>
    <scope>MUTAGENESIS OF HIS-187 AND SER-368</scope>
</reference>
<reference key="22">
    <citation type="journal article" date="2007" name="Mol. Cell. Biochem.">
        <title>Mutations in SIRT2 deacetylase which regulate enzymatic activity but not its interaction with HDAC6 and tubulin.</title>
        <authorList>
            <person name="Nahhas F."/>
            <person name="Dryden S.C."/>
            <person name="Abrams J."/>
            <person name="Tainsky M.A."/>
        </authorList>
    </citation>
    <scope>INTERACTION WITH HDAC6 (ISOFORMS 1 AND 2)</scope>
    <scope>PHOSPHORYLATION AT SER-372 AND SER-368</scope>
    <scope>UBIQUITINATION</scope>
    <scope>MUTAGENESIS OF SER-53; SER-98; SER-100; HIS-187; SER-279; THR-280; SER-311; TYR-315; SER-364; SER-368 AND SER-372</scope>
</reference>
<reference key="23">
    <citation type="journal article" date="2007" name="Neuroscience">
        <title>Mammalian Sir2-related protein (SIRT) 2-mediated modulation of resistance to axonal degeneration in slow Wallerian degeneration mice: a crucial role of tubulin deacetylation.</title>
        <authorList>
            <person name="Suzuki K."/>
            <person name="Koike T."/>
        </authorList>
    </citation>
    <scope>FUNCTION IN AXONAL DEGENERATION</scope>
</reference>
<reference key="24">
    <citation type="journal article" date="2007" name="Oncogene">
        <title>SIRT2, a tubulin deacetylase, acts to block the entry to chromosome condensation in response to mitotic stress.</title>
        <authorList>
            <person name="Inoue T."/>
            <person name="Hiratsuka M."/>
            <person name="Osaki M."/>
            <person name="Yamada H."/>
            <person name="Kishimoto I."/>
            <person name="Yamaguchi S."/>
            <person name="Nakano S."/>
            <person name="Katoh M."/>
            <person name="Ito H."/>
            <person name="Oshimura M."/>
        </authorList>
    </citation>
    <scope>FUNCTION AS REGULATOR OF MITOTIC CELL CYCLE CHECKPOINT</scope>
    <scope>SUBCELLULAR LOCATION</scope>
    <scope>NUCLEOCYTOPLASMIC SHUTTLING</scope>
    <scope>INDUCTION</scope>
    <scope>TISSUE SPECIFICITY</scope>
    <scope>MUTAGENESIS OF GLN-167; ASN-168 AND HIS-187</scope>
</reference>
<reference key="25">
    <citation type="journal article" date="2007" name="PLoS ONE">
        <title>Interphase nucleo-cytoplasmic shuttling and localization of SIRT2 during mitosis.</title>
        <authorList>
            <person name="North B.J."/>
            <person name="Verdin E."/>
        </authorList>
    </citation>
    <scope>FUNCTION AS REGULATOR IN CELL CYCLE PROGRESSION</scope>
    <scope>INTERACTION WITH AURKA</scope>
    <scope>SUBCELLULAR LOCATION</scope>
    <scope>NUCLEOCYTOPLASMIC SHUTTLING</scope>
    <scope>MUTAGENESIS OF HIS-187</scope>
</reference>
<reference key="26">
    <citation type="journal article" date="2008" name="Biochem. Biophys. Res. Commun.">
        <title>Sirt2 interacts with 14-3-3 beta/gamma and down-regulates the activity of p53.</title>
        <authorList>
            <person name="Jin Y.H."/>
            <person name="Kim Y.J."/>
            <person name="Kim D.W."/>
            <person name="Baek K.H."/>
            <person name="Kang B.Y."/>
            <person name="Yeo C.Y."/>
            <person name="Lee K.Y."/>
        </authorList>
    </citation>
    <scope>FUNCTION IN DEACETYLATION OF TP53</scope>
    <scope>FUNCTION IN REGULATION OF TP53</scope>
    <scope>INTERACTION WITH YWHAB AND YWHAG</scope>
</reference>
<reference key="27">
    <citation type="journal article" date="2008" name="Biochem. Biophys. Res. Commun.">
        <title>Acetylation of Sirt2 by p300 attenuates its deacetylase activity.</title>
        <authorList>
            <person name="Han Y."/>
            <person name="Jin Y.H."/>
            <person name="Kim Y.J."/>
            <person name="Kang B.Y."/>
            <person name="Choi H.J."/>
            <person name="Kim D.W."/>
            <person name="Yeo C.Y."/>
            <person name="Lee K.Y."/>
        </authorList>
    </citation>
    <scope>INTERACTION WITH EP300</scope>
    <scope>ACETYLATION BY EP300</scope>
    <scope>ACTIVITY REGULATION</scope>
    <scope>CATALYTIC ACTIVITY</scope>
</reference>
<reference key="28">
    <citation type="journal article" date="2008" name="FEBS Lett.">
        <title>SIRT2 is a negative regulator of anoxia-reoxygenation tolerance via regulation of 14-3-3 zeta and BAD in H9c2 cells.</title>
        <authorList>
            <person name="Lynn E.G."/>
            <person name="McLeod C.J."/>
            <person name="Gordon J.P."/>
            <person name="Bao J."/>
            <person name="Sack M.N."/>
        </authorList>
    </citation>
    <scope>FUNCTION IN STRESS RESPONSE</scope>
    <scope>INDUCTION BY STRESS</scope>
</reference>
<reference key="29">
    <citation type="journal article" date="2008" name="J. Cell Biol.">
        <title>The regulation of SIRT2 function by cyclin-dependent kinases affects cell motility.</title>
        <authorList>
            <person name="Pandithage R."/>
            <person name="Lilischkis R."/>
            <person name="Harting K."/>
            <person name="Wolf A."/>
            <person name="Jedamzik B."/>
            <person name="Luscher-Firzlaff J."/>
            <person name="Vervoorts J."/>
            <person name="Lasonder E."/>
            <person name="Kremmer E."/>
            <person name="Knoll B."/>
            <person name="Luscher B."/>
        </authorList>
    </citation>
    <scope>FUNCTION IN DEACETYLATION OF ALPHA-TUBULIN AND HISTONE</scope>
    <scope>FUNCTION IN REGULATION OF CELL MOTILITY</scope>
    <scope>INTERACTION WITH CDK5R1; CDK5 AND CYCLIN E-CDK2 COMPLEX</scope>
    <scope>PHOSPHORYLATION AT SER-368 BY CDK2 AND CDK5</scope>
    <scope>MUTAGENESIS OF SER-368</scope>
</reference>
<reference key="30">
    <citation type="journal article" date="2008" name="Mol. Cell">
        <title>The SIRT2 deacetylase regulates autoacetylation of p300.</title>
        <authorList>
            <person name="Black J.C."/>
            <person name="Mosley A."/>
            <person name="Kitada T."/>
            <person name="Washburn M."/>
            <person name="Carey M."/>
        </authorList>
    </citation>
    <scope>FUNCTION IN DEACETYLATION OF EP300 AND ALPHA-TUBULIN</scope>
    <scope>FUNCTION IN REGULATION OF EP300</scope>
    <scope>SUBCELLULAR LOCATION</scope>
</reference>
<reference key="31">
    <citation type="journal article" date="2008" name="Proc. Natl. Acad. Sci. U.S.A.">
        <title>A quantitative atlas of mitotic phosphorylation.</title>
        <authorList>
            <person name="Dephoure N."/>
            <person name="Zhou C."/>
            <person name="Villen J."/>
            <person name="Beausoleil S.A."/>
            <person name="Bakalarski C.E."/>
            <person name="Elledge S.J."/>
            <person name="Gygi S.P."/>
        </authorList>
    </citation>
    <scope>IDENTIFICATION BY MASS SPECTROMETRY [LARGE SCALE ANALYSIS]</scope>
    <source>
        <tissue>Cervix carcinoma</tissue>
    </source>
</reference>
<reference key="32">
    <citation type="journal article" date="2009" name="Anal. Chem.">
        <title>Lys-N and trypsin cover complementary parts of the phosphoproteome in a refined SCX-based approach.</title>
        <authorList>
            <person name="Gauci S."/>
            <person name="Helbig A.O."/>
            <person name="Slijper M."/>
            <person name="Krijgsveld J."/>
            <person name="Heck A.J."/>
            <person name="Mohammed S."/>
        </authorList>
    </citation>
    <scope>ACETYLATION [LARGE SCALE ANALYSIS] AT ALA-2</scope>
    <scope>CLEAVAGE OF INITIATOR METHIONINE [LARGE SCALE ANALYSIS]</scope>
    <scope>IDENTIFICATION BY MASS SPECTROMETRY [LARGE SCALE ANALYSIS]</scope>
</reference>
<reference key="33">
    <citation type="journal article" date="2009" name="Cell Cycle">
        <title>SIRT2 downregulation confers resistance to microtubule inhibitors by prolonging chronic mitotic arrest.</title>
        <authorList>
            <person name="Inoue T."/>
            <person name="Nakayama Y."/>
            <person name="Yamada H."/>
            <person name="Li Y.C."/>
            <person name="Yamaguchi S."/>
            <person name="Osaki M."/>
            <person name="Kurimasa A."/>
            <person name="Hiratsuka M."/>
            <person name="Katoh M."/>
            <person name="Oshimura M."/>
        </authorList>
    </citation>
    <scope>FUNCTION AS REGULATOR OF MITOTIC CELL CYCLE CHECKPOINT</scope>
</reference>
<reference key="34">
    <citation type="journal article" date="2009" name="Sci. Signal.">
        <title>Quantitative phosphoproteomic analysis of T cell receptor signaling reveals system-wide modulation of protein-protein interactions.</title>
        <authorList>
            <person name="Mayya V."/>
            <person name="Lundgren D.H."/>
            <person name="Hwang S.-I."/>
            <person name="Rezaul K."/>
            <person name="Wu L."/>
            <person name="Eng J.K."/>
            <person name="Rodionov V."/>
            <person name="Han D.K."/>
        </authorList>
    </citation>
    <scope>IDENTIFICATION BY MASS SPECTROMETRY [LARGE SCALE ANALYSIS]</scope>
    <source>
        <tissue>Leukemic T-cell</tissue>
    </source>
</reference>
<reference key="35">
    <citation type="journal article" date="2010" name="J. Biol. Chem.">
        <title>p300-mediated acetylation of histone H3 lysine 56 functions in DNA damage response in mammals.</title>
        <authorList>
            <person name="Vempati R.K."/>
            <person name="Jayani R.S."/>
            <person name="Notani D."/>
            <person name="Sengupta A."/>
            <person name="Galande S."/>
            <person name="Haldar D."/>
        </authorList>
    </citation>
    <scope>FUNCTION IN DEACETYLATION OF HISTONE H3</scope>
</reference>
<reference key="36">
    <citation type="journal article" date="2010" name="J. Cell Sci.">
        <title>SIRT2 regulates NF-kappaB dependent gene expression through deacetylation of p65 Lys310.</title>
        <authorList>
            <person name="Rothgiesser K.M."/>
            <person name="Erener S."/>
            <person name="Waibel S."/>
            <person name="Luscher B."/>
            <person name="Hottiger M.O."/>
        </authorList>
    </citation>
    <scope>FUNCTION IN DEACETYLATION OF RELA</scope>
    <scope>FUNCTION IN REGULATION OF RELA ACTIVITY</scope>
    <scope>INTERACTION WITH RELA</scope>
    <scope>SUBCELLULAR LOCATION</scope>
</reference>
<reference key="37">
    <citation type="journal article" date="2010" name="Nat. Cell Biol.">
        <title>Cytosolic FoxO1 is essential for the induction of autophagy and tumour suppressor activity.</title>
        <authorList>
            <person name="Zhao Y."/>
            <person name="Yang J."/>
            <person name="Liao W."/>
            <person name="Liu X."/>
            <person name="Zhang H."/>
            <person name="Wang S."/>
            <person name="Wang D."/>
            <person name="Feng J."/>
            <person name="Yu L."/>
            <person name="Zhu W.G."/>
        </authorList>
    </citation>
    <scope>FUNCTION IN DEACETYLATION OF FOXO1</scope>
    <scope>FUNCTION IN AUTOPHAGY</scope>
    <scope>INTERACTION WITH FOXO1</scope>
</reference>
<reference key="38">
    <citation type="journal article" date="2011" name="Cancer Cell">
        <title>SIRT2 maintains genome integrity and suppresses tumorigenesis through regulating APC/C activity.</title>
        <authorList>
            <person name="Kim H.S."/>
            <person name="Vassilopoulos A."/>
            <person name="Wang R.H."/>
            <person name="Lahusen T."/>
            <person name="Xiao Z."/>
            <person name="Xu X."/>
            <person name="Li C."/>
            <person name="Veenstra T.D."/>
            <person name="Li B."/>
            <person name="Yu H."/>
            <person name="Ji J."/>
            <person name="Wang X.W."/>
            <person name="Park S.H."/>
            <person name="Cha Y.I."/>
            <person name="Gius D."/>
            <person name="Deng C.X."/>
        </authorList>
    </citation>
    <scope>FUNCTION IN DEACETYLATION OF CDC20 AND FZR1</scope>
    <scope>FUNCTION AS A TUMOR SUPPRESSOR</scope>
    <scope>TISSUE SPECIFICITY</scope>
    <scope>MUTAGENESIS OF HIS-187</scope>
</reference>
<reference key="39">
    <citation type="journal article" date="2011" name="Hum. Mol. Genet.">
        <title>The Sirtuin 2 microtubule deacetylase is an abundant neuronal protein that accumulates in the aging CNS.</title>
        <authorList>
            <person name="Maxwell M.M."/>
            <person name="Tomkinson E.M."/>
            <person name="Nobles J."/>
            <person name="Wizeman J.W."/>
            <person name="Amore A.M."/>
            <person name="Quinti L."/>
            <person name="Chopra V."/>
            <person name="Hersch S.M."/>
            <person name="Kazantsev A.G."/>
        </authorList>
    </citation>
    <scope>TISSUE SPECIFICITY</scope>
</reference>
<reference key="40">
    <citation type="journal article" date="2011" name="Mol. Cell">
        <title>Acetylation regulates gluconeogenesis by promoting PEPCK1 degradation via recruiting the UBR5 ubiquitin ligase.</title>
        <authorList>
            <person name="Jiang W."/>
            <person name="Wang S."/>
            <person name="Xiao M."/>
            <person name="Lin Y."/>
            <person name="Zhou L."/>
            <person name="Lei Q."/>
            <person name="Xiong Y."/>
            <person name="Guan K.L."/>
            <person name="Zhao S."/>
        </authorList>
    </citation>
    <scope>FUNCTION IN DEACETYLATION OF PCK1</scope>
    <scope>POSSIBLE FUNCTION IN REGULATION OF BLOOD GLUCOSE HOMEOSTASIS</scope>
    <scope>INDUCTION BY GLUCOSE</scope>
</reference>
<reference key="41">
    <citation type="journal article" date="2011" name="Proc. Natl. Acad. Sci. U.S.A.">
        <title>Sir-two-homolog 2 (Sirt2) modulates peripheral myelination through polarity protein Par-3/atypical protein kinase C (aPKC) signaling.</title>
        <authorList>
            <person name="Beirowski B."/>
            <person name="Gustin J."/>
            <person name="Armour S.M."/>
            <person name="Yamamoto H."/>
            <person name="Viader A."/>
            <person name="North B.J."/>
            <person name="Michan S."/>
            <person name="Baloh R.H."/>
            <person name="Golden J.P."/>
            <person name="Schmidt R.E."/>
            <person name="Sinclair D.A."/>
            <person name="Auwerx J."/>
            <person name="Milbrandt J."/>
        </authorList>
    </citation>
    <scope>FUNCTION IN DEACETYLATION OF PARD3</scope>
    <scope>INTERACTION WITH PARD3</scope>
</reference>
<reference key="42">
    <citation type="journal article" date="2012" name="FEBS Lett.">
        <title>Acetylation regulates subcellular localization of eukaryotic translation initiation factor 5A (eIF5A).</title>
        <authorList>
            <person name="Ishfaq M."/>
            <person name="Maeta K."/>
            <person name="Maeda S."/>
            <person name="Natsume T."/>
            <person name="Ito A."/>
            <person name="Yoshida M."/>
        </authorList>
    </citation>
    <scope>FUNCTION IN DEACETYLATION OF EIF5A</scope>
</reference>
<reference key="43">
    <citation type="journal article" date="2012" name="Neurochem. Int.">
        <title>SIRT2 interferes with autophagy-mediated degradation of protein aggregates in neuronal cells under proteasome inhibition.</title>
        <authorList>
            <person name="Gal J."/>
            <person name="Bang Y."/>
            <person name="Choi H.J."/>
        </authorList>
    </citation>
    <scope>FUNCTION IN AUTOPHAGY</scope>
    <scope>SUBCELLULAR LOCATION</scope>
</reference>
<reference key="44">
    <citation type="journal article" date="2012" name="Transl. Cancer Res.">
        <title>SIRT2 is a tumor suppressor that connects aging, acetylome, cell cycle signaling, and carcinogenesis.</title>
        <authorList>
            <person name="Park S.H."/>
            <person name="Zhu Y."/>
            <person name="Ozden O."/>
            <person name="Kim H.S."/>
            <person name="Jiang H."/>
            <person name="Deng C.X."/>
            <person name="Gius D."/>
            <person name="Vassilopoulos A."/>
        </authorList>
    </citation>
    <scope>REVIEW</scope>
    <scope>FUNCTION AS A TUMOR SUPPRESSOR</scope>
</reference>
<reference key="45">
    <citation type="journal article" date="2013" name="Biochem. Biophys. Res. Commun.">
        <title>ERK1/2 regulates SIRT2 deacetylase activity.</title>
        <authorList>
            <person name="Choi Y.H."/>
            <person name="Kim H."/>
            <person name="Lee S.H."/>
            <person name="Jin Y.H."/>
            <person name="Lee K.Y."/>
        </authorList>
    </citation>
    <scope>INTERACTION WITH MAPK1/ERK2 AND MAPK3/ERK1</scope>
</reference>
<reference key="46">
    <citation type="journal article" date="2013" name="Genes Dev.">
        <title>The tumor suppressor SirT2 regulates cell cycle progression and genome stability by modulating the mitotic deposition of H4K20 methylation.</title>
        <authorList>
            <person name="Serrano L."/>
            <person name="Martinez-Redondo P."/>
            <person name="Marazuela-Duque A."/>
            <person name="Vazquez B.N."/>
            <person name="Dooley S.J."/>
            <person name="Voigt P."/>
            <person name="Beck D.B."/>
            <person name="Kane-Goldsmith N."/>
            <person name="Tong Q."/>
            <person name="Rabanal R.M."/>
            <person name="Fondevila D."/>
            <person name="Munoz P."/>
            <person name="Kruger M."/>
            <person name="Tischfield J.A."/>
            <person name="Vaquero A."/>
        </authorList>
    </citation>
    <scope>FUNCTION IN DEACETYLATION OF HISTONE H4K16 AND KMT5A</scope>
    <scope>FUNCTION IN REGULATION OF KMT5A ACTIVITY; H4K20 METHYLATION; CELL CYCLE PROGRESSION AND GENOMIC STABILITY</scope>
    <scope>INTERACTION WITH KMT5A</scope>
    <scope>SUBCELLULAR LOCATION</scope>
    <scope>MASS SPECTROMETRY</scope>
</reference>
<reference key="47">
    <citation type="journal article" date="2013" name="J. Proteome Res.">
        <title>Toward a comprehensive characterization of a human cancer cell phosphoproteome.</title>
        <authorList>
            <person name="Zhou H."/>
            <person name="Di Palma S."/>
            <person name="Preisinger C."/>
            <person name="Peng M."/>
            <person name="Polat A.N."/>
            <person name="Heck A.J."/>
            <person name="Mohammed S."/>
        </authorList>
    </citation>
    <scope>PHOSPHORYLATION [LARGE SCALE ANALYSIS] AT SER-368</scope>
    <scope>IDENTIFICATION BY MASS SPECTROMETRY [LARGE SCALE ANALYSIS]</scope>
    <source>
        <tissue>Cervix carcinoma</tissue>
        <tissue>Erythroleukemia</tissue>
    </source>
</reference>
<reference key="48">
    <citation type="journal article" date="2013" name="Mol. Cell">
        <title>Acetylation stabilizes ATP-citrate lyase to promote lipid biosynthesis and tumor growth.</title>
        <authorList>
            <person name="Lin R."/>
            <person name="Tao R."/>
            <person name="Gao X."/>
            <person name="Li T."/>
            <person name="Zhou X."/>
            <person name="Guan K.L."/>
            <person name="Xiong Y."/>
            <person name="Lei Q.Y."/>
        </authorList>
    </citation>
    <scope>FUNCTION</scope>
</reference>
<reference key="49">
    <citation type="journal article" date="2013" name="Science">
        <title>A role for SIRT2-dependent histone H3K18 deacetylation in bacterial infection.</title>
        <authorList>
            <person name="Eskandarian H.A."/>
            <person name="Impens F."/>
            <person name="Nahori M.A."/>
            <person name="Soubigou G."/>
            <person name="Coppee J.Y."/>
            <person name="Cossart P."/>
            <person name="Hamon M.A."/>
        </authorList>
    </citation>
    <scope>FUNCTION IN DEACETYLATION OF HISTONE H3K18</scope>
    <scope>FUNCTION IN LISTERIA INFECTION</scope>
    <scope>SUBCELLULAR LOCATION</scope>
    <scope>MUTAGENESIS OF ASN-168</scope>
</reference>
<reference key="50">
    <citation type="journal article" date="2014" name="Elife">
        <title>tRNA synthetase counteracts c-Myc to develop functional vasculature.</title>
        <authorList>
            <person name="Shi Y."/>
            <person name="Xu X."/>
            <person name="Zhang Q."/>
            <person name="Fu G."/>
            <person name="Mo Z."/>
            <person name="Wang G.S."/>
            <person name="Kishi S."/>
            <person name="Yang X.L."/>
        </authorList>
    </citation>
    <scope>FUNCTION IN HISTONE H4 DEACETYLATION</scope>
    <scope>FUNCTION IN REGULATION OF VEGFA EXPRESSION AND ANGIOGENESIS</scope>
    <scope>CATALYTIC ACTIVITY</scope>
    <scope>INTERACTION WITH SARS1</scope>
</reference>
<reference key="51">
    <citation type="journal article" date="2014" name="EMBO J.">
        <title>Regulation of G6PD acetylation by KAT9/SIRT2 modulates NADPH homeostasis and cell survival during oxidative stress.</title>
        <authorList>
            <person name="Wang Y.P."/>
            <person name="Zhou L.S."/>
            <person name="Zhao Y.Z."/>
            <person name="Wang S.W."/>
            <person name="Chen L.L."/>
            <person name="Liu L.X."/>
            <person name="Ling Z.Q."/>
            <person name="Hu F.J."/>
            <person name="Sun Y.P."/>
            <person name="Zhang J.Y."/>
            <person name="Yang C."/>
            <person name="Yang Y."/>
            <person name="Xiong Y."/>
            <person name="Guan K.L."/>
            <person name="Ye D."/>
        </authorList>
    </citation>
    <scope>FUNCTION IN DEACETYLATION OF G6PD</scope>
    <scope>FUNCTION IN REGULATION OF G6PD ACTIVITY</scope>
    <scope>INTERACTION WITH G6PD</scope>
    <scope>MUTAGENESIS OF ASN-168</scope>
</reference>
<reference key="52">
    <citation type="journal article" date="2014" name="J. Proteomics">
        <title>An enzyme assisted RP-RPLC approach for in-depth analysis of human liver phosphoproteome.</title>
        <authorList>
            <person name="Bian Y."/>
            <person name="Song C."/>
            <person name="Cheng K."/>
            <person name="Dong M."/>
            <person name="Wang F."/>
            <person name="Huang J."/>
            <person name="Sun D."/>
            <person name="Wang L."/>
            <person name="Ye M."/>
            <person name="Zou H."/>
        </authorList>
    </citation>
    <scope>PHOSPHORYLATION [LARGE SCALE ANALYSIS] AT SER-23; SER-25 AND SER-27</scope>
    <scope>IDENTIFICATION BY MASS SPECTROMETRY [LARGE SCALE ANALYSIS]</scope>
    <source>
        <tissue>Liver</tissue>
    </source>
</reference>
<reference key="53">
    <citation type="journal article" date="2015" name="Oncogene">
        <title>SIRT2 regulates tumour hypoxia response by promoting HIF-1alpha hydroxylation.</title>
        <authorList>
            <person name="Seo K.S."/>
            <person name="Park J.H."/>
            <person name="Heo J.Y."/>
            <person name="Jing K."/>
            <person name="Han J."/>
            <person name="Min K.N."/>
            <person name="Kim C."/>
            <person name="Koh G.Y."/>
            <person name="Lim K."/>
            <person name="Kang G.Y."/>
            <person name="Uee Lee J."/>
            <person name="Yim Y.H."/>
            <person name="Shong M."/>
            <person name="Kwak T.H."/>
            <person name="Kweon G.R."/>
        </authorList>
    </citation>
    <scope>FUNCTION IN DEACETYLATION OF HIF1A</scope>
    <scope>FUNCTION IN REGULATION OF HIF1A STABILITY</scope>
    <scope>INTERACTION WITH HIF1A</scope>
    <scope>MUTAGENESIS OF HIS-187</scope>
    <scope>SUBCELLULAR LOCATION</scope>
    <scope>MASS SPECTROMETRY</scope>
</reference>
<reference key="54">
    <citation type="journal article" date="2016" name="Cell Death Dis.">
        <title>Oncogenic microtubule hyperacetylation through BEX4-mediated sirtuin 2 inhibition.</title>
        <authorList>
            <person name="Lee J.K."/>
            <person name="Lee J."/>
            <person name="Go H."/>
            <person name="Lee C.G."/>
            <person name="Kim S."/>
            <person name="Kim H.S."/>
            <person name="Cho H."/>
            <person name="Choi K.S."/>
            <person name="Ha G.H."/>
            <person name="Lee C.W."/>
        </authorList>
    </citation>
    <scope>INTERACTION WITH BEX4</scope>
    <scope>MUTAGENESIS OF HIS-187</scope>
</reference>
<reference key="55">
    <citation type="journal article" date="2017" name="Elife">
        <title>SIRT2 and lysine fatty acylation regulate the transforming activity of K-Ras4a.</title>
        <authorList>
            <person name="Jing H."/>
            <person name="Zhang X."/>
            <person name="Wisner S.A."/>
            <person name="Chen X."/>
            <person name="Spiegelman N.A."/>
            <person name="Linder M.E."/>
            <person name="Lin H."/>
        </authorList>
    </citation>
    <scope>FUNCTION</scope>
    <scope>CATALYTIC ACTIVITY</scope>
    <scope>MUTAGENESIS OF HIS-187</scope>
</reference>
<reference key="56">
    <citation type="journal article" date="2020" name="Nat. Commun.">
        <title>NMT1 and NMT2 are lysine myristoyltransferases regulating the ARF6 GTPase cycle.</title>
        <authorList>
            <person name="Kosciuk T."/>
            <person name="Price I.R."/>
            <person name="Zhang X."/>
            <person name="Zhu C."/>
            <person name="Johnson K.N."/>
            <person name="Zhang S."/>
            <person name="Halaby S.L."/>
            <person name="Komaniecki G.P."/>
            <person name="Yang M."/>
            <person name="DeHart C.J."/>
            <person name="Thomas P.M."/>
            <person name="Kelleher N.L."/>
            <person name="Fromme J.C."/>
            <person name="Lin H."/>
        </authorList>
    </citation>
    <scope>FUNCTION</scope>
    <scope>CATALYTIC ACTIVITY</scope>
</reference>
<reference key="57">
    <citation type="journal article" date="2001" name="Nat. Struct. Biol.">
        <title>Structure of the histone deacetylase SIRT2.</title>
        <authorList>
            <person name="Finnin M.S."/>
            <person name="Donigian J.R."/>
            <person name="Pavletich N.P."/>
        </authorList>
    </citation>
    <scope>X-RAY CRYSTALLOGRAPHY (1.7 ANGSTROMS) OF 34-356 IN COMPLEX WITH ZINC</scope>
    <scope>MUTAGENESIS OF ARG-97; GLN-167; ASN-168; ASP-170 AND HIS-187</scope>
</reference>
<reference key="58">
    <citation type="journal article" date="2013" name="J. Struct. Biol.">
        <title>Crystal structure analysis of human Sirt2 and its ADP-ribose complex.</title>
        <authorList>
            <person name="Moniot S."/>
            <person name="Schutkowski M."/>
            <person name="Steegborn C."/>
        </authorList>
    </citation>
    <scope>X-RAY CRYSTALLOGRAPHY (1.63 ANGSTROMS) OF 34-356 IN COMPLEX WITH NAD ANALOG AND ZINC</scope>
</reference>
<reference evidence="61" key="59">
    <citation type="journal article" date="2014" name="Structure">
        <title>Structural basis for potent inhibition of SIRT2 deacetylase by a macrocyclic peptide inducing dynamic structural change.</title>
        <authorList>
            <person name="Yamagata K."/>
            <person name="Goto Y."/>
            <person name="Nishimasu H."/>
            <person name="Morimoto J."/>
            <person name="Ishitani R."/>
            <person name="Dohmae N."/>
            <person name="Takeda N."/>
            <person name="Nagai R."/>
            <person name="Komuro I."/>
            <person name="Suga H."/>
            <person name="Nureki O."/>
        </authorList>
    </citation>
    <scope>X-RAY CRYSTALLOGRAPHY (2.52 ANGSTROMS) OF 55-356 IN COMPLEX WITH PEPTIDE INHIBITOR AND ZINC</scope>
    <scope>ACTIVITY REGULATION</scope>
    <scope>CATALYTIC ACTIVITY</scope>
    <scope>MUTAGENESIS OF GLU-116; GLU-120; PHE-244; GLN-265; SER-271 AND ASP-294</scope>
</reference>
<reference evidence="63 64 65 66" key="60">
    <citation type="journal article" date="2015" name="Nat. Commun.">
        <title>Selective Sirt2 inhibition by ligand-induced rearrangement of the active site.</title>
        <authorList>
            <person name="Rumpf T."/>
            <person name="Schiedel M."/>
            <person name="Karaman B."/>
            <person name="Roessler C."/>
            <person name="North B.J."/>
            <person name="Lehotzky A."/>
            <person name="Olah J."/>
            <person name="Ladwein K.I."/>
            <person name="Schmidtkunz K."/>
            <person name="Gajer M."/>
            <person name="Pannek M."/>
            <person name="Steegborn C."/>
            <person name="Sinclair D.A."/>
            <person name="Gerhardt S."/>
            <person name="Ovadi J."/>
            <person name="Schutkowski M."/>
            <person name="Sippl W."/>
            <person name="Einsle O."/>
            <person name="Jung M."/>
        </authorList>
    </citation>
    <scope>X-RAY CRYSTALLOGRAPHY (1.42 ANGSTROMS) OF 56-356 IN COMPLEX WITH NAD AND ZINC</scope>
    <scope>CATALYTIC ACTIVITY</scope>
    <scope>COFACTOR</scope>
</reference>
<reference evidence="62" key="61">
    <citation type="journal article" date="2015" name="Sci. Rep.">
        <title>Efficient demyristoylase activity of SIRT2 revealed by kinetic and structural studies.</title>
        <authorList>
            <person name="Teng Y.B."/>
            <person name="Jing H."/>
            <person name="Aramsangtienchai P."/>
            <person name="He B."/>
            <person name="Khan S."/>
            <person name="Hu J."/>
            <person name="Lin H."/>
            <person name="Hao Q."/>
        </authorList>
    </citation>
    <scope>X-RAY CRYSTALLOGRAPHY (2.10 ANGSTROMS) OF 38-356 IN COMPLEX WITH ZINC</scope>
    <scope>FUNCTION</scope>
    <scope>CATALYTIC ACTIVITY</scope>
    <scope>COFACTOR</scope>
    <scope>BIOPHYSICOCHEMICAL PROPERTIES</scope>
</reference>
<organism>
    <name type="scientific">Homo sapiens</name>
    <name type="common">Human</name>
    <dbReference type="NCBI Taxonomy" id="9606"/>
    <lineage>
        <taxon>Eukaryota</taxon>
        <taxon>Metazoa</taxon>
        <taxon>Chordata</taxon>
        <taxon>Craniata</taxon>
        <taxon>Vertebrata</taxon>
        <taxon>Euteleostomi</taxon>
        <taxon>Mammalia</taxon>
        <taxon>Eutheria</taxon>
        <taxon>Euarchontoglires</taxon>
        <taxon>Primates</taxon>
        <taxon>Haplorrhini</taxon>
        <taxon>Catarrhini</taxon>
        <taxon>Hominidae</taxon>
        <taxon>Homo</taxon>
    </lineage>
</organism>
<proteinExistence type="evidence at protein level"/>
<accession>Q8IXJ6</accession>
<accession>A8K3V1</accession>
<accession>B2RB45</accession>
<accession>O95889</accession>
<accession>Q924Y7</accession>
<accession>Q9P0G8</accession>
<accession>Q9UNT0</accession>
<accession>Q9Y6E9</accession>
<accession>U5TP13</accession>
<name>SIR2_HUMAN</name>
<dbReference type="EC" id="2.3.1.286" evidence="4 9 10 16 25 42"/>
<dbReference type="EC" id="2.3.1.-" evidence="48 50 51"/>
<dbReference type="EMBL" id="AF083107">
    <property type="protein sequence ID" value="AAD40850.2"/>
    <property type="molecule type" value="mRNA"/>
</dbReference>
<dbReference type="EMBL" id="AF095714">
    <property type="protein sequence ID" value="AAD45971.1"/>
    <property type="status" value="ALT_INIT"/>
    <property type="molecule type" value="mRNA"/>
</dbReference>
<dbReference type="EMBL" id="AY030277">
    <property type="protein sequence ID" value="AAK51133.1"/>
    <property type="molecule type" value="mRNA"/>
</dbReference>
<dbReference type="EMBL" id="KF032391">
    <property type="protein sequence ID" value="AGZ02589.1"/>
    <property type="molecule type" value="mRNA"/>
</dbReference>
<dbReference type="EMBL" id="AJ505014">
    <property type="protein sequence ID" value="CAD43717.1"/>
    <property type="molecule type" value="mRNA"/>
</dbReference>
<dbReference type="EMBL" id="AF160214">
    <property type="protein sequence ID" value="AAF67015.1"/>
    <property type="status" value="ALT_FRAME"/>
    <property type="molecule type" value="mRNA"/>
</dbReference>
<dbReference type="EMBL" id="AK290716">
    <property type="protein sequence ID" value="BAF83405.1"/>
    <property type="molecule type" value="mRNA"/>
</dbReference>
<dbReference type="EMBL" id="AK314492">
    <property type="protein sequence ID" value="BAG37092.1"/>
    <property type="molecule type" value="mRNA"/>
</dbReference>
<dbReference type="EMBL" id="CH471126">
    <property type="protein sequence ID" value="EAW56833.1"/>
    <property type="molecule type" value="Genomic_DNA"/>
</dbReference>
<dbReference type="EMBL" id="CH471126">
    <property type="protein sequence ID" value="EAW56835.1"/>
    <property type="molecule type" value="Genomic_DNA"/>
</dbReference>
<dbReference type="EMBL" id="BC003012">
    <property type="protein sequence ID" value="AAH03012.1"/>
    <property type="molecule type" value="mRNA"/>
</dbReference>
<dbReference type="EMBL" id="BC003547">
    <property type="protein sequence ID" value="AAH03547.1"/>
    <property type="molecule type" value="mRNA"/>
</dbReference>
<dbReference type="EMBL" id="AF131800">
    <property type="protein sequence ID" value="AAD20046.1"/>
    <property type="molecule type" value="mRNA"/>
</dbReference>
<dbReference type="CCDS" id="CCDS12523.1">
    <molecule id="Q8IXJ6-1"/>
</dbReference>
<dbReference type="CCDS" id="CCDS46069.1">
    <molecule id="Q8IXJ6-2"/>
</dbReference>
<dbReference type="RefSeq" id="NP_001180215.1">
    <property type="nucleotide sequence ID" value="NM_001193286.1"/>
</dbReference>
<dbReference type="RefSeq" id="NP_036369.2">
    <molecule id="Q8IXJ6-1"/>
    <property type="nucleotide sequence ID" value="NM_012237.3"/>
</dbReference>
<dbReference type="RefSeq" id="NP_085096.1">
    <molecule id="Q8IXJ6-2"/>
    <property type="nucleotide sequence ID" value="NM_030593.3"/>
</dbReference>
<dbReference type="RefSeq" id="XP_006723174.1">
    <property type="nucleotide sequence ID" value="XM_006723111.1"/>
</dbReference>
<dbReference type="RefSeq" id="XP_011524956.1">
    <property type="nucleotide sequence ID" value="XM_011526654.1"/>
</dbReference>
<dbReference type="RefSeq" id="XP_011524957.1">
    <molecule id="Q8IXJ6-5"/>
    <property type="nucleotide sequence ID" value="XM_011526655.2"/>
</dbReference>
<dbReference type="RefSeq" id="XP_047294424.1">
    <molecule id="Q8IXJ6-2"/>
    <property type="nucleotide sequence ID" value="XM_047438468.1"/>
</dbReference>
<dbReference type="RefSeq" id="XP_054176249.1">
    <molecule id="Q8IXJ6-2"/>
    <property type="nucleotide sequence ID" value="XM_054320274.1"/>
</dbReference>
<dbReference type="RefSeq" id="XP_054176250.1">
    <molecule id="Q8IXJ6-5"/>
    <property type="nucleotide sequence ID" value="XM_054320275.1"/>
</dbReference>
<dbReference type="RefSeq" id="XP_054187933.1">
    <molecule id="Q8IXJ6-2"/>
    <property type="nucleotide sequence ID" value="XM_054331958.1"/>
</dbReference>
<dbReference type="RefSeq" id="XP_054187934.1">
    <molecule id="Q8IXJ6-5"/>
    <property type="nucleotide sequence ID" value="XM_054331959.1"/>
</dbReference>
<dbReference type="PDB" id="1J8F">
    <property type="method" value="X-ray"/>
    <property type="resolution" value="1.70 A"/>
    <property type="chains" value="A/B/C=34-356"/>
</dbReference>
<dbReference type="PDB" id="3ZGO">
    <property type="method" value="X-ray"/>
    <property type="resolution" value="1.63 A"/>
    <property type="chains" value="A/B/C=34-356"/>
</dbReference>
<dbReference type="PDB" id="3ZGV">
    <property type="method" value="X-ray"/>
    <property type="resolution" value="2.27 A"/>
    <property type="chains" value="A/B=34-356"/>
</dbReference>
<dbReference type="PDB" id="4L3O">
    <property type="method" value="X-ray"/>
    <property type="resolution" value="2.52 A"/>
    <property type="chains" value="A/B/C/D=55-356"/>
</dbReference>
<dbReference type="PDB" id="4R8M">
    <property type="method" value="X-ray"/>
    <property type="resolution" value="2.10 A"/>
    <property type="chains" value="A/B=38-356"/>
</dbReference>
<dbReference type="PDB" id="4RMG">
    <property type="method" value="X-ray"/>
    <property type="resolution" value="1.88 A"/>
    <property type="chains" value="A=56-356"/>
</dbReference>
<dbReference type="PDB" id="4RMH">
    <property type="method" value="X-ray"/>
    <property type="resolution" value="1.42 A"/>
    <property type="chains" value="A=56-356"/>
</dbReference>
<dbReference type="PDB" id="4RMI">
    <property type="method" value="X-ray"/>
    <property type="resolution" value="1.45 A"/>
    <property type="chains" value="A=56-356"/>
</dbReference>
<dbReference type="PDB" id="4RMJ">
    <property type="method" value="X-ray"/>
    <property type="resolution" value="1.87 A"/>
    <property type="chains" value="A/B=56-356"/>
</dbReference>
<dbReference type="PDB" id="4X3O">
    <property type="method" value="X-ray"/>
    <property type="resolution" value="1.50 A"/>
    <property type="chains" value="A=52-355"/>
</dbReference>
<dbReference type="PDB" id="4X3P">
    <property type="method" value="X-ray"/>
    <property type="resolution" value="1.80 A"/>
    <property type="chains" value="A=52-355"/>
</dbReference>
<dbReference type="PDB" id="4Y6L">
    <property type="method" value="X-ray"/>
    <property type="resolution" value="1.60 A"/>
    <property type="chains" value="A/B=52-356"/>
</dbReference>
<dbReference type="PDB" id="4Y6O">
    <property type="method" value="X-ray"/>
    <property type="resolution" value="1.60 A"/>
    <property type="chains" value="A/B=52-356"/>
</dbReference>
<dbReference type="PDB" id="4Y6Q">
    <property type="method" value="X-ray"/>
    <property type="resolution" value="1.90 A"/>
    <property type="chains" value="A/B/C/D=52-356"/>
</dbReference>
<dbReference type="PDB" id="5D7O">
    <property type="method" value="X-ray"/>
    <property type="resolution" value="1.63 A"/>
    <property type="chains" value="A/B=50-356"/>
</dbReference>
<dbReference type="PDB" id="5D7P">
    <property type="method" value="X-ray"/>
    <property type="resolution" value="1.76 A"/>
    <property type="chains" value="A/B=56-356"/>
</dbReference>
<dbReference type="PDB" id="5D7Q">
    <property type="method" value="X-ray"/>
    <property type="resolution" value="2.01 A"/>
    <property type="chains" value="A/B=56-356"/>
</dbReference>
<dbReference type="PDB" id="5DY4">
    <property type="method" value="X-ray"/>
    <property type="resolution" value="1.77 A"/>
    <property type="chains" value="A=56-356"/>
</dbReference>
<dbReference type="PDB" id="5DY5">
    <property type="method" value="X-ray"/>
    <property type="resolution" value="1.95 A"/>
    <property type="chains" value="A=56-356"/>
</dbReference>
<dbReference type="PDB" id="5FYQ">
    <property type="method" value="X-ray"/>
    <property type="resolution" value="3.00 A"/>
    <property type="chains" value="A/B=1-356"/>
</dbReference>
<dbReference type="PDB" id="5G4C">
    <property type="method" value="X-ray"/>
    <property type="resolution" value="2.10 A"/>
    <property type="chains" value="A/B=34-356"/>
</dbReference>
<dbReference type="PDB" id="5MAR">
    <property type="method" value="X-ray"/>
    <property type="resolution" value="1.89 A"/>
    <property type="chains" value="A/B=56-356"/>
</dbReference>
<dbReference type="PDB" id="5MAT">
    <property type="method" value="X-ray"/>
    <property type="resolution" value="2.07 A"/>
    <property type="chains" value="A/C=56-356"/>
</dbReference>
<dbReference type="PDB" id="5Y0Z">
    <property type="method" value="X-ray"/>
    <property type="resolution" value="2.00 A"/>
    <property type="chains" value="A/B=52-356"/>
</dbReference>
<dbReference type="PDB" id="5Y5N">
    <property type="method" value="X-ray"/>
    <property type="resolution" value="2.30 A"/>
    <property type="chains" value="A=32-356"/>
</dbReference>
<dbReference type="PDB" id="5YQL">
    <property type="method" value="X-ray"/>
    <property type="resolution" value="1.60 A"/>
    <property type="chains" value="A=56-356"/>
</dbReference>
<dbReference type="PDB" id="5YQM">
    <property type="method" value="X-ray"/>
    <property type="resolution" value="1.74 A"/>
    <property type="chains" value="A=56-356"/>
</dbReference>
<dbReference type="PDB" id="5YQN">
    <property type="method" value="X-ray"/>
    <property type="resolution" value="1.60 A"/>
    <property type="chains" value="A=56-356"/>
</dbReference>
<dbReference type="PDB" id="5YQO">
    <property type="method" value="X-ray"/>
    <property type="resolution" value="1.48 A"/>
    <property type="chains" value="A=56-356"/>
</dbReference>
<dbReference type="PDB" id="6L65">
    <property type="method" value="X-ray"/>
    <property type="resolution" value="1.80 A"/>
    <property type="chains" value="A=50-355"/>
</dbReference>
<dbReference type="PDB" id="6L66">
    <property type="method" value="X-ray"/>
    <property type="resolution" value="2.17 A"/>
    <property type="chains" value="A=52-355"/>
</dbReference>
<dbReference type="PDB" id="6L71">
    <property type="method" value="X-ray"/>
    <property type="resolution" value="2.11 A"/>
    <property type="chains" value="A=52-355"/>
</dbReference>
<dbReference type="PDB" id="6L72">
    <property type="method" value="X-ray"/>
    <property type="resolution" value="2.50 A"/>
    <property type="chains" value="A=52-355"/>
</dbReference>
<dbReference type="PDB" id="6NR0">
    <property type="method" value="X-ray"/>
    <property type="resolution" value="2.45 A"/>
    <property type="chains" value="A/B=38-356"/>
</dbReference>
<dbReference type="PDB" id="6QCN">
    <property type="method" value="X-ray"/>
    <property type="resolution" value="2.23 A"/>
    <property type="chains" value="A/B=55-356"/>
</dbReference>
<dbReference type="PDB" id="7BOS">
    <property type="method" value="X-ray"/>
    <property type="resolution" value="1.70 A"/>
    <property type="chains" value="A=52-356"/>
</dbReference>
<dbReference type="PDB" id="7BOT">
    <property type="method" value="X-ray"/>
    <property type="resolution" value="1.70 A"/>
    <property type="chains" value="A=52-356"/>
</dbReference>
<dbReference type="PDB" id="8OWZ">
    <property type="method" value="X-ray"/>
    <property type="resolution" value="1.65 A"/>
    <property type="chains" value="A=56-356"/>
</dbReference>
<dbReference type="PDB" id="8PY3">
    <property type="method" value="X-ray"/>
    <property type="resolution" value="1.65 A"/>
    <property type="chains" value="A=56-356"/>
</dbReference>
<dbReference type="PDB" id="8QOO">
    <property type="method" value="X-ray"/>
    <property type="resolution" value="1.55 A"/>
    <property type="chains" value="A=56-356"/>
</dbReference>
<dbReference type="PDB" id="8QT0">
    <property type="method" value="X-ray"/>
    <property type="resolution" value="1.85 A"/>
    <property type="chains" value="A=56-356"/>
</dbReference>
<dbReference type="PDB" id="8QT1">
    <property type="method" value="X-ray"/>
    <property type="resolution" value="1.55 A"/>
    <property type="chains" value="A=56-356"/>
</dbReference>
<dbReference type="PDB" id="8QT2">
    <property type="method" value="X-ray"/>
    <property type="resolution" value="1.65 A"/>
    <property type="chains" value="A=56-356"/>
</dbReference>
<dbReference type="PDB" id="8QT3">
    <property type="method" value="X-ray"/>
    <property type="resolution" value="1.55 A"/>
    <property type="chains" value="A=56-356"/>
</dbReference>
<dbReference type="PDB" id="8QT4">
    <property type="method" value="X-ray"/>
    <property type="resolution" value="1.55 A"/>
    <property type="chains" value="A=56-356"/>
</dbReference>
<dbReference type="PDB" id="8QT8">
    <property type="method" value="X-ray"/>
    <property type="resolution" value="1.65 A"/>
    <property type="chains" value="A=56-356"/>
</dbReference>
<dbReference type="PDB" id="8QTU">
    <property type="method" value="X-ray"/>
    <property type="resolution" value="1.80 A"/>
    <property type="chains" value="A=56-356"/>
</dbReference>
<dbReference type="PDB" id="8TGP">
    <property type="method" value="X-ray"/>
    <property type="resolution" value="1.76 A"/>
    <property type="chains" value="A=34-356"/>
</dbReference>
<dbReference type="PDB" id="8XE7">
    <property type="method" value="X-ray"/>
    <property type="resolution" value="1.95 A"/>
    <property type="chains" value="A=52-357"/>
</dbReference>
<dbReference type="PDBsum" id="1J8F"/>
<dbReference type="PDBsum" id="3ZGO"/>
<dbReference type="PDBsum" id="3ZGV"/>
<dbReference type="PDBsum" id="4L3O"/>
<dbReference type="PDBsum" id="4R8M"/>
<dbReference type="PDBsum" id="4RMG"/>
<dbReference type="PDBsum" id="4RMH"/>
<dbReference type="PDBsum" id="4RMI"/>
<dbReference type="PDBsum" id="4RMJ"/>
<dbReference type="PDBsum" id="4X3O"/>
<dbReference type="PDBsum" id="4X3P"/>
<dbReference type="PDBsum" id="4Y6L"/>
<dbReference type="PDBsum" id="4Y6O"/>
<dbReference type="PDBsum" id="4Y6Q"/>
<dbReference type="PDBsum" id="5D7O"/>
<dbReference type="PDBsum" id="5D7P"/>
<dbReference type="PDBsum" id="5D7Q"/>
<dbReference type="PDBsum" id="5DY4"/>
<dbReference type="PDBsum" id="5DY5"/>
<dbReference type="PDBsum" id="5FYQ"/>
<dbReference type="PDBsum" id="5G4C"/>
<dbReference type="PDBsum" id="5MAR"/>
<dbReference type="PDBsum" id="5MAT"/>
<dbReference type="PDBsum" id="5Y0Z"/>
<dbReference type="PDBsum" id="5Y5N"/>
<dbReference type="PDBsum" id="5YQL"/>
<dbReference type="PDBsum" id="5YQM"/>
<dbReference type="PDBsum" id="5YQN"/>
<dbReference type="PDBsum" id="5YQO"/>
<dbReference type="PDBsum" id="6L65"/>
<dbReference type="PDBsum" id="6L66"/>
<dbReference type="PDBsum" id="6L71"/>
<dbReference type="PDBsum" id="6L72"/>
<dbReference type="PDBsum" id="6NR0"/>
<dbReference type="PDBsum" id="6QCN"/>
<dbReference type="PDBsum" id="7BOS"/>
<dbReference type="PDBsum" id="7BOT"/>
<dbReference type="PDBsum" id="8OWZ"/>
<dbReference type="PDBsum" id="8PY3"/>
<dbReference type="PDBsum" id="8QOO"/>
<dbReference type="PDBsum" id="8QT0"/>
<dbReference type="PDBsum" id="8QT1"/>
<dbReference type="PDBsum" id="8QT2"/>
<dbReference type="PDBsum" id="8QT3"/>
<dbReference type="PDBsum" id="8QT4"/>
<dbReference type="PDBsum" id="8QT8"/>
<dbReference type="PDBsum" id="8QTU"/>
<dbReference type="PDBsum" id="8TGP"/>
<dbReference type="PDBsum" id="8XE7"/>
<dbReference type="SMR" id="Q8IXJ6"/>
<dbReference type="BioGRID" id="116593">
    <property type="interactions" value="152"/>
</dbReference>
<dbReference type="DIP" id="DIP-33350N"/>
<dbReference type="FunCoup" id="Q8IXJ6">
    <property type="interactions" value="847"/>
</dbReference>
<dbReference type="IntAct" id="Q8IXJ6">
    <property type="interactions" value="62"/>
</dbReference>
<dbReference type="MINT" id="Q8IXJ6"/>
<dbReference type="STRING" id="9606.ENSP00000249396"/>
<dbReference type="BindingDB" id="Q8IXJ6"/>
<dbReference type="ChEMBL" id="CHEMBL4462"/>
<dbReference type="DrugBank" id="DB15493">
    <property type="generic name" value="Cambinol"/>
</dbReference>
<dbReference type="DrugCentral" id="Q8IXJ6"/>
<dbReference type="GuidetoPHARMACOLOGY" id="2708"/>
<dbReference type="iPTMnet" id="Q8IXJ6"/>
<dbReference type="PhosphoSitePlus" id="Q8IXJ6"/>
<dbReference type="SwissPalm" id="Q8IXJ6"/>
<dbReference type="BioMuta" id="SIRT2"/>
<dbReference type="DMDM" id="38258608"/>
<dbReference type="jPOST" id="Q8IXJ6"/>
<dbReference type="MassIVE" id="Q8IXJ6"/>
<dbReference type="PaxDb" id="9606-ENSP00000249396"/>
<dbReference type="PeptideAtlas" id="Q8IXJ6"/>
<dbReference type="ProteomicsDB" id="71008">
    <molecule id="Q8IXJ6-1"/>
</dbReference>
<dbReference type="ProteomicsDB" id="71009">
    <molecule id="Q8IXJ6-2"/>
</dbReference>
<dbReference type="ProteomicsDB" id="71010">
    <molecule id="Q8IXJ6-3"/>
</dbReference>
<dbReference type="ProteomicsDB" id="71011">
    <molecule id="Q8IXJ6-4"/>
</dbReference>
<dbReference type="Pumba" id="Q8IXJ6"/>
<dbReference type="Antibodypedia" id="2167">
    <property type="antibodies" value="590 antibodies from 47 providers"/>
</dbReference>
<dbReference type="DNASU" id="22933"/>
<dbReference type="Ensembl" id="ENST00000249396.12">
    <molecule id="Q8IXJ6-1"/>
    <property type="protein sequence ID" value="ENSP00000249396.7"/>
    <property type="gene ID" value="ENSG00000068903.21"/>
</dbReference>
<dbReference type="Ensembl" id="ENST00000392081.6">
    <molecule id="Q8IXJ6-2"/>
    <property type="protein sequence ID" value="ENSP00000375931.2"/>
    <property type="gene ID" value="ENSG00000068903.21"/>
</dbReference>
<dbReference type="Ensembl" id="ENST00000634533.2">
    <molecule id="Q8IXJ6-1"/>
    <property type="protein sequence ID" value="ENSP00000489602.1"/>
    <property type="gene ID" value="ENSG00000283100.2"/>
</dbReference>
<dbReference type="Ensembl" id="ENST00000635478.1">
    <molecule id="Q8IXJ6-2"/>
    <property type="protein sequence ID" value="ENSP00000488940.1"/>
    <property type="gene ID" value="ENSG00000283100.2"/>
</dbReference>
<dbReference type="GeneID" id="22933"/>
<dbReference type="KEGG" id="hsa:22933"/>
<dbReference type="MANE-Select" id="ENST00000249396.12">
    <property type="protein sequence ID" value="ENSP00000249396.7"/>
    <property type="RefSeq nucleotide sequence ID" value="NM_012237.4"/>
    <property type="RefSeq protein sequence ID" value="NP_036369.2"/>
</dbReference>
<dbReference type="UCSC" id="uc002ojt.3">
    <molecule id="Q8IXJ6-1"/>
    <property type="organism name" value="human"/>
</dbReference>
<dbReference type="AGR" id="HGNC:10886"/>
<dbReference type="CTD" id="22933"/>
<dbReference type="DisGeNET" id="22933"/>
<dbReference type="GeneCards" id="SIRT2"/>
<dbReference type="HGNC" id="HGNC:10886">
    <property type="gene designation" value="SIRT2"/>
</dbReference>
<dbReference type="HPA" id="ENSG00000068903">
    <property type="expression patterns" value="Group enriched (brain, skeletal muscle, tongue)"/>
</dbReference>
<dbReference type="MIM" id="604480">
    <property type="type" value="gene"/>
</dbReference>
<dbReference type="neXtProt" id="NX_Q8IXJ6"/>
<dbReference type="OpenTargets" id="ENSG00000068903"/>
<dbReference type="PharmGKB" id="PA35786"/>
<dbReference type="VEuPathDB" id="HostDB:ENSG00000068903"/>
<dbReference type="eggNOG" id="KOG2682">
    <property type="taxonomic scope" value="Eukaryota"/>
</dbReference>
<dbReference type="GeneTree" id="ENSGT00940000157514"/>
<dbReference type="HOGENOM" id="CLU_023643_7_4_1"/>
<dbReference type="InParanoid" id="Q8IXJ6"/>
<dbReference type="OMA" id="ATHSCID"/>
<dbReference type="OrthoDB" id="420264at2759"/>
<dbReference type="PAN-GO" id="Q8IXJ6">
    <property type="GO annotations" value="4 GO annotations based on evolutionary models"/>
</dbReference>
<dbReference type="PhylomeDB" id="Q8IXJ6"/>
<dbReference type="TreeFam" id="TF106181"/>
<dbReference type="BioCyc" id="MetaCyc:ENSG00000068903-MONOMER"/>
<dbReference type="BRENDA" id="2.3.1.286">
    <property type="organism ID" value="2681"/>
</dbReference>
<dbReference type="PathwayCommons" id="Q8IXJ6"/>
<dbReference type="Reactome" id="R-HSA-2995383">
    <property type="pathway name" value="Initiation of Nuclear Envelope (NE) Reformation"/>
</dbReference>
<dbReference type="SABIO-RK" id="Q8IXJ6"/>
<dbReference type="SignaLink" id="Q8IXJ6"/>
<dbReference type="SIGNOR" id="Q8IXJ6"/>
<dbReference type="BioGRID-ORCS" id="22933">
    <property type="hits" value="18 hits in 1176 CRISPR screens"/>
</dbReference>
<dbReference type="CD-CODE" id="8C2F96ED">
    <property type="entry name" value="Centrosome"/>
</dbReference>
<dbReference type="CD-CODE" id="FB4E32DD">
    <property type="entry name" value="Presynaptic clusters and postsynaptic densities"/>
</dbReference>
<dbReference type="ChiTaRS" id="SIRT2">
    <property type="organism name" value="human"/>
</dbReference>
<dbReference type="EvolutionaryTrace" id="Q8IXJ6"/>
<dbReference type="GeneWiki" id="SIRT2"/>
<dbReference type="GenomeRNAi" id="22933"/>
<dbReference type="Pharos" id="Q8IXJ6">
    <property type="development level" value="Tchem"/>
</dbReference>
<dbReference type="PRO" id="PR:Q8IXJ6"/>
<dbReference type="Proteomes" id="UP000005640">
    <property type="component" value="Chromosome 19"/>
</dbReference>
<dbReference type="RNAct" id="Q8IXJ6">
    <property type="molecule type" value="protein"/>
</dbReference>
<dbReference type="Bgee" id="ENSG00000068903">
    <property type="expression patterns" value="Expressed in C1 segment of cervical spinal cord and 159 other cell types or tissues"/>
</dbReference>
<dbReference type="ExpressionAtlas" id="Q8IXJ6">
    <property type="expression patterns" value="baseline and differential"/>
</dbReference>
<dbReference type="GO" id="GO:0005814">
    <property type="term" value="C:centriole"/>
    <property type="evidence" value="ECO:0000314"/>
    <property type="project" value="UniProtKB"/>
</dbReference>
<dbReference type="GO" id="GO:0005813">
    <property type="term" value="C:centrosome"/>
    <property type="evidence" value="ECO:0000314"/>
    <property type="project" value="UniProtKB"/>
</dbReference>
<dbReference type="GO" id="GO:0005677">
    <property type="term" value="C:chromatin silencing complex"/>
    <property type="evidence" value="ECO:0000303"/>
    <property type="project" value="UniProtKB"/>
</dbReference>
<dbReference type="GO" id="GO:0005694">
    <property type="term" value="C:chromosome"/>
    <property type="evidence" value="ECO:0000314"/>
    <property type="project" value="UniProtKB"/>
</dbReference>
<dbReference type="GO" id="GO:0000781">
    <property type="term" value="C:chromosome, telomeric region"/>
    <property type="evidence" value="ECO:0007669"/>
    <property type="project" value="GOC"/>
</dbReference>
<dbReference type="GO" id="GO:0005737">
    <property type="term" value="C:cytoplasm"/>
    <property type="evidence" value="ECO:0000314"/>
    <property type="project" value="UniProtKB"/>
</dbReference>
<dbReference type="GO" id="GO:0005829">
    <property type="term" value="C:cytosol"/>
    <property type="evidence" value="ECO:0000314"/>
    <property type="project" value="HPA"/>
</dbReference>
<dbReference type="GO" id="GO:0097386">
    <property type="term" value="C:glial cell projection"/>
    <property type="evidence" value="ECO:0000250"/>
    <property type="project" value="UniProtKB"/>
</dbReference>
<dbReference type="GO" id="GO:0030426">
    <property type="term" value="C:growth cone"/>
    <property type="evidence" value="ECO:0007669"/>
    <property type="project" value="UniProtKB-SubCell"/>
</dbReference>
<dbReference type="GO" id="GO:0000792">
    <property type="term" value="C:heterochromatin"/>
    <property type="evidence" value="ECO:0000250"/>
    <property type="project" value="UniProtKB"/>
</dbReference>
<dbReference type="GO" id="GO:0044224">
    <property type="term" value="C:juxtaparanode region of axon"/>
    <property type="evidence" value="ECO:0000250"/>
    <property type="project" value="UniProtKB"/>
</dbReference>
<dbReference type="GO" id="GO:0043219">
    <property type="term" value="C:lateral loop"/>
    <property type="evidence" value="ECO:0000250"/>
    <property type="project" value="UniProtKB"/>
</dbReference>
<dbReference type="GO" id="GO:0072687">
    <property type="term" value="C:meiotic spindle"/>
    <property type="evidence" value="ECO:0000250"/>
    <property type="project" value="UniProtKB"/>
</dbReference>
<dbReference type="GO" id="GO:0005874">
    <property type="term" value="C:microtubule"/>
    <property type="evidence" value="ECO:0000314"/>
    <property type="project" value="UniProtKB"/>
</dbReference>
<dbReference type="GO" id="GO:0030496">
    <property type="term" value="C:midbody"/>
    <property type="evidence" value="ECO:0000314"/>
    <property type="project" value="UniProtKB"/>
</dbReference>
<dbReference type="GO" id="GO:0005739">
    <property type="term" value="C:mitochondrion"/>
    <property type="evidence" value="ECO:0006056"/>
    <property type="project" value="FlyBase"/>
</dbReference>
<dbReference type="GO" id="GO:0072686">
    <property type="term" value="C:mitotic spindle"/>
    <property type="evidence" value="ECO:0000314"/>
    <property type="project" value="UniProtKB"/>
</dbReference>
<dbReference type="GO" id="GO:0043209">
    <property type="term" value="C:myelin sheath"/>
    <property type="evidence" value="ECO:0000250"/>
    <property type="project" value="UniProtKB"/>
</dbReference>
<dbReference type="GO" id="GO:0005730">
    <property type="term" value="C:nucleolus"/>
    <property type="evidence" value="ECO:0000314"/>
    <property type="project" value="HPA"/>
</dbReference>
<dbReference type="GO" id="GO:0005634">
    <property type="term" value="C:nucleus"/>
    <property type="evidence" value="ECO:0000314"/>
    <property type="project" value="UniProtKB"/>
</dbReference>
<dbReference type="GO" id="GO:0033010">
    <property type="term" value="C:paranodal junction"/>
    <property type="evidence" value="ECO:0000250"/>
    <property type="project" value="UniProtKB"/>
</dbReference>
<dbReference type="GO" id="GO:0033270">
    <property type="term" value="C:paranode region of axon"/>
    <property type="evidence" value="ECO:0000250"/>
    <property type="project" value="UniProtKB"/>
</dbReference>
<dbReference type="GO" id="GO:0043204">
    <property type="term" value="C:perikaryon"/>
    <property type="evidence" value="ECO:0000250"/>
    <property type="project" value="UniProtKB"/>
</dbReference>
<dbReference type="GO" id="GO:0048471">
    <property type="term" value="C:perinuclear region of cytoplasm"/>
    <property type="evidence" value="ECO:0000250"/>
    <property type="project" value="UniProtKB"/>
</dbReference>
<dbReference type="GO" id="GO:0005886">
    <property type="term" value="C:plasma membrane"/>
    <property type="evidence" value="ECO:0000314"/>
    <property type="project" value="HPA"/>
</dbReference>
<dbReference type="GO" id="GO:0043220">
    <property type="term" value="C:Schmidt-Lanterman incisure"/>
    <property type="evidence" value="ECO:0000250"/>
    <property type="project" value="UniProtKB"/>
</dbReference>
<dbReference type="GO" id="GO:0005819">
    <property type="term" value="C:spindle"/>
    <property type="evidence" value="ECO:0000314"/>
    <property type="project" value="UniProtKB"/>
</dbReference>
<dbReference type="GO" id="GO:0003682">
    <property type="term" value="F:chromatin binding"/>
    <property type="evidence" value="ECO:0000314"/>
    <property type="project" value="UniProtKB"/>
</dbReference>
<dbReference type="GO" id="GO:0140297">
    <property type="term" value="F:DNA-binding transcription factor binding"/>
    <property type="evidence" value="ECO:0000353"/>
    <property type="project" value="UniProtKB"/>
</dbReference>
<dbReference type="GO" id="GO:0035035">
    <property type="term" value="F:histone acetyltransferase binding"/>
    <property type="evidence" value="ECO:0000353"/>
    <property type="project" value="UniProtKB"/>
</dbReference>
<dbReference type="GO" id="GO:0004407">
    <property type="term" value="F:histone deacetylase activity"/>
    <property type="evidence" value="ECO:0000314"/>
    <property type="project" value="UniProtKB"/>
</dbReference>
<dbReference type="GO" id="GO:0017136">
    <property type="term" value="F:histone deacetylase activity, NAD-dependent"/>
    <property type="evidence" value="ECO:0000314"/>
    <property type="project" value="UniProtKB"/>
</dbReference>
<dbReference type="GO" id="GO:0042826">
    <property type="term" value="F:histone deacetylase binding"/>
    <property type="evidence" value="ECO:0000353"/>
    <property type="project" value="UniProtKB"/>
</dbReference>
<dbReference type="GO" id="GO:0046970">
    <property type="term" value="F:histone H4K16 deacetylase activity, NAD-dependent"/>
    <property type="evidence" value="ECO:0000314"/>
    <property type="project" value="UniProtKB"/>
</dbReference>
<dbReference type="GO" id="GO:0070403">
    <property type="term" value="F:NAD+ binding"/>
    <property type="evidence" value="ECO:0000314"/>
    <property type="project" value="UniProtKB"/>
</dbReference>
<dbReference type="GO" id="GO:0003950">
    <property type="term" value="F:NAD+ poly-ADP-ribosyltransferase activity"/>
    <property type="evidence" value="ECO:0000314"/>
    <property type="project" value="GO_Central"/>
</dbReference>
<dbReference type="GO" id="GO:0140773">
    <property type="term" value="F:NAD-dependent protein demyristoylase activity"/>
    <property type="evidence" value="ECO:0000314"/>
    <property type="project" value="UniProtKB"/>
</dbReference>
<dbReference type="GO" id="GO:0140774">
    <property type="term" value="F:NAD-dependent protein depalmitoylase activity"/>
    <property type="evidence" value="ECO:0000314"/>
    <property type="project" value="UniProtKB"/>
</dbReference>
<dbReference type="GO" id="GO:0034979">
    <property type="term" value="F:NAD-dependent protein lysine deacetylase activity"/>
    <property type="evidence" value="ECO:0000314"/>
    <property type="project" value="UniProtKB"/>
</dbReference>
<dbReference type="GO" id="GO:0033558">
    <property type="term" value="F:protein lysine deacetylase activity"/>
    <property type="evidence" value="ECO:0000314"/>
    <property type="project" value="UniProtKB"/>
</dbReference>
<dbReference type="GO" id="GO:0042903">
    <property type="term" value="F:tubulin deacetylase activity"/>
    <property type="evidence" value="ECO:0000314"/>
    <property type="project" value="UniProtKB"/>
</dbReference>
<dbReference type="GO" id="GO:0043130">
    <property type="term" value="F:ubiquitin binding"/>
    <property type="evidence" value="ECO:0000314"/>
    <property type="project" value="UniProtKB"/>
</dbReference>
<dbReference type="GO" id="GO:0008270">
    <property type="term" value="F:zinc ion binding"/>
    <property type="evidence" value="ECO:0000314"/>
    <property type="project" value="UniProtKB"/>
</dbReference>
<dbReference type="GO" id="GO:0006914">
    <property type="term" value="P:autophagy"/>
    <property type="evidence" value="ECO:0007669"/>
    <property type="project" value="UniProtKB-KW"/>
</dbReference>
<dbReference type="GO" id="GO:0051301">
    <property type="term" value="P:cell division"/>
    <property type="evidence" value="ECO:0007669"/>
    <property type="project" value="UniProtKB-KW"/>
</dbReference>
<dbReference type="GO" id="GO:0061433">
    <property type="term" value="P:cellular response to caloric restriction"/>
    <property type="evidence" value="ECO:0000250"/>
    <property type="project" value="UniProtKB"/>
</dbReference>
<dbReference type="GO" id="GO:0071872">
    <property type="term" value="P:cellular response to epinephrine stimulus"/>
    <property type="evidence" value="ECO:0000250"/>
    <property type="project" value="UniProtKB"/>
</dbReference>
<dbReference type="GO" id="GO:0071456">
    <property type="term" value="P:cellular response to hypoxia"/>
    <property type="evidence" value="ECO:0000314"/>
    <property type="project" value="UniProtKB"/>
</dbReference>
<dbReference type="GO" id="GO:0034599">
    <property type="term" value="P:cellular response to oxidative stress"/>
    <property type="evidence" value="ECO:0000250"/>
    <property type="project" value="UniProtKB"/>
</dbReference>
<dbReference type="GO" id="GO:0040029">
    <property type="term" value="P:epigenetic regulation of gene expression"/>
    <property type="evidence" value="ECO:0000315"/>
    <property type="project" value="UniProtKB"/>
</dbReference>
<dbReference type="GO" id="GO:0031507">
    <property type="term" value="P:heterochromatin formation"/>
    <property type="evidence" value="ECO:0000303"/>
    <property type="project" value="UniProtKB"/>
</dbReference>
<dbReference type="GO" id="GO:0045087">
    <property type="term" value="P:innate immune response"/>
    <property type="evidence" value="ECO:0007669"/>
    <property type="project" value="UniProtKB-KW"/>
</dbReference>
<dbReference type="GO" id="GO:0016042">
    <property type="term" value="P:lipid catabolic process"/>
    <property type="evidence" value="ECO:0000250"/>
    <property type="project" value="UniProtKB"/>
</dbReference>
<dbReference type="GO" id="GO:0051321">
    <property type="term" value="P:meiotic cell cycle"/>
    <property type="evidence" value="ECO:0007669"/>
    <property type="project" value="UniProtKB-KW"/>
</dbReference>
<dbReference type="GO" id="GO:0007084">
    <property type="term" value="P:mitotic nuclear membrane reassembly"/>
    <property type="evidence" value="ECO:0000304"/>
    <property type="project" value="Reactome"/>
</dbReference>
<dbReference type="GO" id="GO:0022011">
    <property type="term" value="P:myelination in peripheral nervous system"/>
    <property type="evidence" value="ECO:0000250"/>
    <property type="project" value="UniProtKB"/>
</dbReference>
<dbReference type="GO" id="GO:0010507">
    <property type="term" value="P:negative regulation of autophagy"/>
    <property type="evidence" value="ECO:0000315"/>
    <property type="project" value="UniProtKB"/>
</dbReference>
<dbReference type="GO" id="GO:0045892">
    <property type="term" value="P:negative regulation of DNA-templated transcription"/>
    <property type="evidence" value="ECO:0000314"/>
    <property type="project" value="UniProtKB"/>
</dbReference>
<dbReference type="GO" id="GO:0045599">
    <property type="term" value="P:negative regulation of fat cell differentiation"/>
    <property type="evidence" value="ECO:0000250"/>
    <property type="project" value="UniProtKB"/>
</dbReference>
<dbReference type="GO" id="GO:1900226">
    <property type="term" value="P:negative regulation of NLRP3 inflammasome complex assembly"/>
    <property type="evidence" value="ECO:0007669"/>
    <property type="project" value="Ensembl"/>
</dbReference>
<dbReference type="GO" id="GO:0070446">
    <property type="term" value="P:negative regulation of oligodendrocyte progenitor proliferation"/>
    <property type="evidence" value="ECO:0000250"/>
    <property type="project" value="UniProtKB"/>
</dbReference>
<dbReference type="GO" id="GO:0010801">
    <property type="term" value="P:negative regulation of peptidyl-threonine phosphorylation"/>
    <property type="evidence" value="ECO:0000250"/>
    <property type="project" value="UniProtKB"/>
</dbReference>
<dbReference type="GO" id="GO:0042177">
    <property type="term" value="P:negative regulation of protein catabolic process"/>
    <property type="evidence" value="ECO:0000315"/>
    <property type="project" value="UniProtKB"/>
</dbReference>
<dbReference type="GO" id="GO:2000378">
    <property type="term" value="P:negative regulation of reactive oxygen species metabolic process"/>
    <property type="evidence" value="ECO:0000250"/>
    <property type="project" value="UniProtKB"/>
</dbReference>
<dbReference type="GO" id="GO:1902725">
    <property type="term" value="P:negative regulation of satellite cell differentiation"/>
    <property type="evidence" value="ECO:0000250"/>
    <property type="project" value="UniProt"/>
</dbReference>
<dbReference type="GO" id="GO:0045843">
    <property type="term" value="P:negative regulation of striated muscle tissue development"/>
    <property type="evidence" value="ECO:0000314"/>
    <property type="project" value="UniProtKB"/>
</dbReference>
<dbReference type="GO" id="GO:0000122">
    <property type="term" value="P:negative regulation of transcription by RNA polymerase II"/>
    <property type="evidence" value="ECO:0000314"/>
    <property type="project" value="UniProtKB"/>
</dbReference>
<dbReference type="GO" id="GO:0044546">
    <property type="term" value="P:NLRP3 inflammasome complex assembly"/>
    <property type="evidence" value="ECO:0007669"/>
    <property type="project" value="Ensembl"/>
</dbReference>
<dbReference type="GO" id="GO:0034983">
    <property type="term" value="P:peptidyl-lysine deacetylation"/>
    <property type="evidence" value="ECO:0000314"/>
    <property type="project" value="UniProtKB"/>
</dbReference>
<dbReference type="GO" id="GO:0051987">
    <property type="term" value="P:positive regulation of attachment of spindle microtubules to kinetochore"/>
    <property type="evidence" value="ECO:0000250"/>
    <property type="project" value="UniProtKB"/>
</dbReference>
<dbReference type="GO" id="GO:0051781">
    <property type="term" value="P:positive regulation of cell division"/>
    <property type="evidence" value="ECO:0000250"/>
    <property type="project" value="UniProtKB"/>
</dbReference>
<dbReference type="GO" id="GO:0043388">
    <property type="term" value="P:positive regulation of DNA binding"/>
    <property type="evidence" value="ECO:0000250"/>
    <property type="project" value="UniProtKB"/>
</dbReference>
<dbReference type="GO" id="GO:1900119">
    <property type="term" value="P:positive regulation of execution phase of apoptosis"/>
    <property type="evidence" value="ECO:0000250"/>
    <property type="project" value="UniProtKB"/>
</dbReference>
<dbReference type="GO" id="GO:0045723">
    <property type="term" value="P:positive regulation of fatty acid biosynthetic process"/>
    <property type="evidence" value="ECO:0000314"/>
    <property type="project" value="UniProt"/>
</dbReference>
<dbReference type="GO" id="GO:0045836">
    <property type="term" value="P:positive regulation of meiotic nuclear division"/>
    <property type="evidence" value="ECO:0000250"/>
    <property type="project" value="UniProtKB"/>
</dbReference>
<dbReference type="GO" id="GO:1900195">
    <property type="term" value="P:positive regulation of oocyte maturation"/>
    <property type="evidence" value="ECO:0000250"/>
    <property type="project" value="UniProtKB"/>
</dbReference>
<dbReference type="GO" id="GO:0032436">
    <property type="term" value="P:positive regulation of proteasomal ubiquitin-dependent protein catabolic process"/>
    <property type="evidence" value="ECO:0000315"/>
    <property type="project" value="UniProtKB"/>
</dbReference>
<dbReference type="GO" id="GO:0045944">
    <property type="term" value="P:positive regulation of transcription by RNA polymerase II"/>
    <property type="evidence" value="ECO:0000250"/>
    <property type="project" value="UniProtKB"/>
</dbReference>
<dbReference type="GO" id="GO:0043161">
    <property type="term" value="P:proteasome-mediated ubiquitin-dependent protein catabolic process"/>
    <property type="evidence" value="ECO:0000315"/>
    <property type="project" value="UniProtKB"/>
</dbReference>
<dbReference type="GO" id="GO:0006476">
    <property type="term" value="P:protein deacetylation"/>
    <property type="evidence" value="ECO:0000314"/>
    <property type="project" value="UniProtKB"/>
</dbReference>
<dbReference type="GO" id="GO:0000183">
    <property type="term" value="P:rDNA heterochromatin formation"/>
    <property type="evidence" value="ECO:0000318"/>
    <property type="project" value="GO_Central"/>
</dbReference>
<dbReference type="GO" id="GO:0051726">
    <property type="term" value="P:regulation of cell cycle"/>
    <property type="evidence" value="ECO:0000315"/>
    <property type="project" value="UniProtKB"/>
</dbReference>
<dbReference type="GO" id="GO:0007096">
    <property type="term" value="P:regulation of exit from mitosis"/>
    <property type="evidence" value="ECO:0000303"/>
    <property type="project" value="UniProtKB"/>
</dbReference>
<dbReference type="GO" id="GO:0031641">
    <property type="term" value="P:regulation of myelination"/>
    <property type="evidence" value="ECO:0000250"/>
    <property type="project" value="UniProtKB"/>
</dbReference>
<dbReference type="GO" id="GO:0042325">
    <property type="term" value="P:regulation of phosphorylation"/>
    <property type="evidence" value="ECO:0000303"/>
    <property type="project" value="UniProtKB"/>
</dbReference>
<dbReference type="GO" id="GO:0051775">
    <property type="term" value="P:response to redox state"/>
    <property type="evidence" value="ECO:0000303"/>
    <property type="project" value="UniProtKB"/>
</dbReference>
<dbReference type="GO" id="GO:0021762">
    <property type="term" value="P:substantia nigra development"/>
    <property type="evidence" value="ECO:0007007"/>
    <property type="project" value="UniProtKB"/>
</dbReference>
<dbReference type="GO" id="GO:0031509">
    <property type="term" value="P:subtelomeric heterochromatin formation"/>
    <property type="evidence" value="ECO:0000303"/>
    <property type="project" value="UniProtKB"/>
</dbReference>
<dbReference type="GO" id="GO:0090042">
    <property type="term" value="P:tubulin deacetylation"/>
    <property type="evidence" value="ECO:0000314"/>
    <property type="project" value="UniProtKB"/>
</dbReference>
<dbReference type="CDD" id="cd01408">
    <property type="entry name" value="SIRT1"/>
    <property type="match status" value="1"/>
</dbReference>
<dbReference type="FunFam" id="3.40.50.1220:FF:000005">
    <property type="entry name" value="NAD-dependent deacetylase sirtuin-2"/>
    <property type="match status" value="1"/>
</dbReference>
<dbReference type="FunFam" id="3.30.1600.10:FF:000013">
    <property type="entry name" value="NAD-dependent protein deacetylase sirtuin-1"/>
    <property type="match status" value="1"/>
</dbReference>
<dbReference type="Gene3D" id="3.30.1600.10">
    <property type="entry name" value="SIR2/SIRT2 'Small Domain"/>
    <property type="match status" value="1"/>
</dbReference>
<dbReference type="Gene3D" id="3.40.50.1220">
    <property type="entry name" value="TPP-binding domain"/>
    <property type="match status" value="1"/>
</dbReference>
<dbReference type="InterPro" id="IPR029035">
    <property type="entry name" value="DHS-like_NAD/FAD-binding_dom"/>
</dbReference>
<dbReference type="InterPro" id="IPR050134">
    <property type="entry name" value="NAD-dep_sirtuin_deacylases"/>
</dbReference>
<dbReference type="InterPro" id="IPR003000">
    <property type="entry name" value="Sirtuin"/>
</dbReference>
<dbReference type="InterPro" id="IPR026591">
    <property type="entry name" value="Sirtuin_cat_small_dom_sf"/>
</dbReference>
<dbReference type="InterPro" id="IPR017328">
    <property type="entry name" value="Sirtuin_class_I"/>
</dbReference>
<dbReference type="InterPro" id="IPR026590">
    <property type="entry name" value="Ssirtuin_cat_dom"/>
</dbReference>
<dbReference type="PANTHER" id="PTHR11085:SF6">
    <property type="entry name" value="NAD-DEPENDENT PROTEIN DEACETYLASE SIRTUIN-2"/>
    <property type="match status" value="1"/>
</dbReference>
<dbReference type="PANTHER" id="PTHR11085">
    <property type="entry name" value="NAD-DEPENDENT PROTEIN DEACYLASE SIRTUIN-5, MITOCHONDRIAL-RELATED"/>
    <property type="match status" value="1"/>
</dbReference>
<dbReference type="Pfam" id="PF02146">
    <property type="entry name" value="SIR2"/>
    <property type="match status" value="1"/>
</dbReference>
<dbReference type="PIRSF" id="PIRSF037938">
    <property type="entry name" value="SIR2_euk"/>
    <property type="match status" value="1"/>
</dbReference>
<dbReference type="SUPFAM" id="SSF52467">
    <property type="entry name" value="DHS-like NAD/FAD-binding domain"/>
    <property type="match status" value="1"/>
</dbReference>
<dbReference type="PROSITE" id="PS50305">
    <property type="entry name" value="SIRTUIN"/>
    <property type="match status" value="1"/>
</dbReference>
<feature type="initiator methionine" description="Removed" evidence="67">
    <location>
        <position position="1"/>
    </location>
</feature>
<feature type="chain" id="PRO_0000110258" description="NAD-dependent protein deacetylase sirtuin-2">
    <location>
        <begin position="2"/>
        <end position="389"/>
    </location>
</feature>
<feature type="domain" description="Deacetylase sirtuin-type" evidence="4">
    <location>
        <begin position="57"/>
        <end position="338"/>
    </location>
</feature>
<feature type="region of interest" description="Disordered" evidence="5">
    <location>
        <begin position="1"/>
        <end position="34"/>
    </location>
</feature>
<feature type="region of interest" description="Disordered" evidence="5">
    <location>
        <begin position="351"/>
        <end position="389"/>
    </location>
</feature>
<feature type="short sequence motif" description="Nuclear export signal">
    <location>
        <begin position="41"/>
        <end position="51"/>
    </location>
</feature>
<feature type="compositionally biased region" description="Low complexity" evidence="5">
    <location>
        <begin position="361"/>
        <end position="370"/>
    </location>
</feature>
<feature type="compositionally biased region" description="Basic and acidic residues" evidence="5">
    <location>
        <begin position="376"/>
        <end position="389"/>
    </location>
</feature>
<feature type="active site" description="Proton acceptor" evidence="4">
    <location>
        <position position="187"/>
    </location>
</feature>
<feature type="binding site" evidence="47 63">
    <location>
        <begin position="85"/>
        <end position="89"/>
    </location>
    <ligand>
        <name>NAD(+)</name>
        <dbReference type="ChEBI" id="CHEBI:57540"/>
    </ligand>
</feature>
<feature type="binding site" evidence="47 63">
    <location>
        <begin position="95"/>
        <end position="97"/>
    </location>
    <ligand>
        <name>NAD(+)</name>
        <dbReference type="ChEBI" id="CHEBI:57540"/>
    </ligand>
</feature>
<feature type="binding site" evidence="47 63">
    <location>
        <begin position="167"/>
        <end position="170"/>
    </location>
    <ligand>
        <name>NAD(+)</name>
        <dbReference type="ChEBI" id="CHEBI:57540"/>
    </ligand>
</feature>
<feature type="binding site" evidence="4 8 37 43 47 48 62">
    <location>
        <position position="195"/>
    </location>
    <ligand>
        <name>Zn(2+)</name>
        <dbReference type="ChEBI" id="CHEBI:29105"/>
    </ligand>
</feature>
<feature type="binding site" evidence="4 8 37 43 47 48 62">
    <location>
        <position position="200"/>
    </location>
    <ligand>
        <name>Zn(2+)</name>
        <dbReference type="ChEBI" id="CHEBI:29105"/>
    </ligand>
</feature>
<feature type="binding site" evidence="4 8 37 43 47 48 62">
    <location>
        <position position="221"/>
    </location>
    <ligand>
        <name>Zn(2+)</name>
        <dbReference type="ChEBI" id="CHEBI:29105"/>
    </ligand>
</feature>
<feature type="binding site" evidence="4 8 37 43 47 48 62">
    <location>
        <position position="224"/>
    </location>
    <ligand>
        <name>Zn(2+)</name>
        <dbReference type="ChEBI" id="CHEBI:29105"/>
    </ligand>
</feature>
<feature type="binding site" evidence="47 63">
    <location>
        <begin position="262"/>
        <end position="263"/>
    </location>
    <ligand>
        <name>NAD(+)</name>
        <dbReference type="ChEBI" id="CHEBI:57540"/>
    </ligand>
</feature>
<feature type="binding site" evidence="47 63">
    <location>
        <begin position="286"/>
        <end position="288"/>
    </location>
    <ligand>
        <name>NAD(+)</name>
        <dbReference type="ChEBI" id="CHEBI:57540"/>
    </ligand>
</feature>
<feature type="binding site" evidence="47 63">
    <location>
        <position position="324"/>
    </location>
    <ligand>
        <name>NAD(+)</name>
        <dbReference type="ChEBI" id="CHEBI:57540"/>
    </ligand>
</feature>
<feature type="modified residue" description="N-acetylalanine" evidence="67">
    <location>
        <position position="2"/>
    </location>
</feature>
<feature type="modified residue" description="Phosphoserine" evidence="69">
    <location>
        <position position="23"/>
    </location>
</feature>
<feature type="modified residue" description="Phosphoserine" evidence="69">
    <location>
        <position position="25"/>
    </location>
</feature>
<feature type="modified residue" description="Phosphoserine" evidence="69">
    <location>
        <position position="27"/>
    </location>
</feature>
<feature type="modified residue" description="Phosphoserine" evidence="2">
    <location>
        <position position="53"/>
    </location>
</feature>
<feature type="modified residue" description="Phosphoserine" evidence="2">
    <location>
        <position position="100"/>
    </location>
</feature>
<feature type="modified residue" description="Phosphoserine" evidence="2">
    <location>
        <position position="207"/>
    </location>
</feature>
<feature type="modified residue" description="Phosphoserine; by CDK2 and CDK5" evidence="18 19 23 68">
    <location>
        <position position="368"/>
    </location>
</feature>
<feature type="modified residue" description="Phosphoserine" evidence="19">
    <location>
        <position position="372"/>
    </location>
</feature>
<feature type="splice variant" id="VSP_008726" description="In isoform 3." evidence="59">
    <original>MAEPDPSHPLETQAGKVQEAQDSDSDSEGGAAGGEADM</original>
    <variation>MPLAECPSCRCLSSFRSV</variation>
    <location>
        <begin position="1"/>
        <end position="38"/>
    </location>
</feature>
<feature type="splice variant" id="VSP_008724" description="In isoform 2." evidence="52 53 54 55 56">
    <location>
        <begin position="1"/>
        <end position="37"/>
    </location>
</feature>
<feature type="splice variant" id="VSP_055328" description="In isoform 5." evidence="57">
    <original>PSHPLETQAGKVQEAQDSDSDSEGGAAGGEADMDFLRNLFSQTLSLGSQKERLLDELTLEGVARYMQSERC</original>
    <variation>R</variation>
    <location>
        <begin position="6"/>
        <end position="76"/>
    </location>
</feature>
<feature type="splice variant" id="VSP_008727" description="In isoform 4." evidence="58">
    <original>VQPFAS</original>
    <variation>GRGLAG</variation>
    <location>
        <begin position="266"/>
        <end position="271"/>
    </location>
</feature>
<feature type="splice variant" id="VSP_008728" description="In isoform 4." evidence="58">
    <location>
        <begin position="272"/>
        <end position="389"/>
    </location>
</feature>
<feature type="mutagenesis site" description="Reduces deacetylase activity." evidence="19">
    <original>S</original>
    <variation>A</variation>
    <location>
        <position position="53"/>
    </location>
</feature>
<feature type="mutagenesis site" description="No effect on deacetylase activity." evidence="8">
    <original>R</original>
    <variation>A</variation>
    <location>
        <position position="97"/>
    </location>
</feature>
<feature type="mutagenesis site" description="Inhibits deacetylase activity." evidence="19">
    <original>S</original>
    <variation>A</variation>
    <location>
        <position position="98"/>
    </location>
</feature>
<feature type="mutagenesis site" description="Reduces deacetylase activity." evidence="19">
    <original>S</original>
    <variation>A</variation>
    <location>
        <position position="100"/>
    </location>
</feature>
<feature type="mutagenesis site" description="Reduces binding for the peptide inhibitor S2iL5." evidence="43">
    <original>E</original>
    <variation>A</variation>
    <location>
        <position position="116"/>
    </location>
</feature>
<feature type="mutagenesis site" description="Reduces binding for the peptide inhibitor S2iL5." evidence="43">
    <original>E</original>
    <variation>A</variation>
    <location>
        <position position="120"/>
    </location>
</feature>
<feature type="mutagenesis site" description="Reduces deacetylase activity. Inhibits the block of entry to chromosome condensation and subsequent hyperploidy cell formation in response to mitotic stress; when associated with A-168 and A-187." evidence="8 17">
    <original>Q</original>
    <variation>A</variation>
    <location>
        <position position="167"/>
    </location>
</feature>
<feature type="mutagenesis site" description="Abolishes deacetylation of alpha-tubulin. Inhibits deacetylation of histone H3 at 'Lys-18'. Inhibits the block of entry to chromosome condensation and subsequent hyperploidy cell formation in response to mitotic stress; when associated with A-167 and A-187." evidence="8 11 17 40 45">
    <original>N</original>
    <variation>A</variation>
    <location>
        <position position="168"/>
    </location>
</feature>
<feature type="mutagenesis site" description="Reduces deacetylase activity." evidence="8">
    <original>D</original>
    <variation>A</variation>
    <variation>N</variation>
    <location>
        <position position="170"/>
    </location>
</feature>
<feature type="mutagenesis site" description="Inhibits deacetylase activity toward histone, alpha-tubulin, FZR1 and CDC20. No effect on CDK2-dependent phosphorylation. Does not inhibit interaction with alpha-tubulin, HDAC6, HIF1A and the cyclin E-CDK2 complex. Inhibits interaction with BEX4 and KMT5A. Abolishes deacetylation, dimeric formation and enzymatic activity increase of G6PD. Prevents histone H4 methylation at 'Lys-20'(H4K20me1) in metaphase chromosomes. Inhibits the block of entry to chromosome condensation and subsequent hyperploidy cell formation in response to mitotic stress; when associated with A-167 and A-168. Strongly reduced activity toward long-chain fatty acyl groups." evidence="6 8 10 11 12 17 18 19 21 34 44 49 50">
    <original>H</original>
    <variation>Y</variation>
    <variation>A</variation>
    <location>
        <position position="187"/>
    </location>
</feature>
<feature type="mutagenesis site" description="Strongly reduces binding for the peptide inhibitor S2iL5." evidence="43">
    <original>F</original>
    <variation>A</variation>
    <location>
        <position position="244"/>
    </location>
</feature>
<feature type="mutagenesis site" description="Reduces binding for the peptide inhibitor S2iL5." evidence="43">
    <original>Q</original>
    <variation>A</variation>
    <location>
        <position position="265"/>
    </location>
</feature>
<feature type="mutagenesis site" description="Reduces binding for the peptide inhibitor S2iL5." evidence="43">
    <original>S</original>
    <variation>A</variation>
    <location>
        <position position="271"/>
    </location>
</feature>
<feature type="mutagenesis site" description="Reduces deacetylase activity." evidence="19">
    <original>S</original>
    <variation>A</variation>
    <location>
        <position position="279"/>
    </location>
</feature>
<feature type="mutagenesis site" description="Reduces deacetylase activity." evidence="19">
    <original>T</original>
    <variation>A</variation>
    <location>
        <position position="280"/>
    </location>
</feature>
<feature type="mutagenesis site" description="Reduces binding for the peptide inhibitor S2iL5." evidence="43">
    <original>D</original>
    <variation>A</variation>
    <location>
        <position position="294"/>
    </location>
</feature>
<feature type="mutagenesis site" description="Reduces deacetylase activity." evidence="19">
    <original>S</original>
    <variation>A</variation>
    <location>
        <position position="311"/>
    </location>
</feature>
<feature type="mutagenesis site" description="Reduces deacetylase activity." evidence="19">
    <original>Y</original>
    <variation>A</variation>
    <location>
        <position position="315"/>
    </location>
</feature>
<feature type="mutagenesis site" description="Abolishes CDK2-dependent phosphorylation." evidence="19">
    <original>S</original>
    <variation>A</variation>
    <location>
        <position position="364"/>
    </location>
</feature>
<feature type="mutagenesis site" description="Does not affect deacetylase activity. Abolishes CDK2-dependent phosphorylation. Inhibits cellular proliferation delay in the early metaphase to prevent chromosomal instability. Does not inhibit interaction with a cyclin E-CDK2 complex. Does not inhibit interaction with HDAC6 and ubiquitination. Inhibits cell adhesion and migration and neurite outgrowth. Inhibits deacetylase activity; when associated with A-372." evidence="18 19 23">
    <original>S</original>
    <variation>A</variation>
    <location>
        <position position="368"/>
    </location>
</feature>
<feature type="mutagenesis site" description="Abolishes CDK2-dependent phosphorylation. Inhibits interaction with a cyclin E-CDK2 complex. Reduces strongly histone deacetylation activity." evidence="18 19 23">
    <original>S</original>
    <variation>D</variation>
    <location>
        <position position="368"/>
    </location>
</feature>
<feature type="mutagenesis site" description="Abolishes CDK2-dependent phosphorylation." evidence="18 19 23">
    <original>S</original>
    <variation>E</variation>
    <location>
        <position position="368"/>
    </location>
</feature>
<feature type="mutagenesis site" description="Reduces phosphorylation. Does not inhibit interaction with HDAC6, ubiquitination and deacetylase activity. Inhibits deacetylase activity; when associated with A-368." evidence="19">
    <original>S</original>
    <variation>A</variation>
    <location>
        <position position="372"/>
    </location>
</feature>
<feature type="sequence conflict" description="In Ref. 6." evidence="60" ref="6">
    <original>S</original>
    <variation>N</variation>
    <location>
        <position position="199"/>
    </location>
</feature>
<feature type="sequence conflict" description="In Ref. 5; CAD43717." evidence="60" ref="5">
    <original>P</original>
    <variation>L</variation>
    <location>
        <position position="219"/>
    </location>
</feature>
<feature type="helix" evidence="70">
    <location>
        <begin position="35"/>
        <end position="45"/>
    </location>
</feature>
<feature type="strand" evidence="71">
    <location>
        <begin position="60"/>
        <end position="63"/>
    </location>
</feature>
<feature type="helix" evidence="71">
    <location>
        <begin position="64"/>
        <end position="71"/>
    </location>
</feature>
<feature type="strand" evidence="76">
    <location>
        <begin position="73"/>
        <end position="75"/>
    </location>
</feature>
<feature type="strand" evidence="71">
    <location>
        <begin position="79"/>
        <end position="83"/>
    </location>
</feature>
<feature type="helix" evidence="71">
    <location>
        <begin position="85"/>
        <end position="87"/>
    </location>
</feature>
<feature type="helix" evidence="71">
    <location>
        <begin position="89"/>
        <end position="91"/>
    </location>
</feature>
<feature type="strand" evidence="72">
    <location>
        <begin position="96"/>
        <end position="98"/>
    </location>
</feature>
<feature type="helix" evidence="71">
    <location>
        <begin position="99"/>
        <end position="101"/>
    </location>
</feature>
<feature type="helix" evidence="73">
    <location>
        <begin position="103"/>
        <end position="105"/>
    </location>
</feature>
<feature type="helix" evidence="73">
    <location>
        <begin position="108"/>
        <end position="110"/>
    </location>
</feature>
<feature type="helix" evidence="71">
    <location>
        <begin position="115"/>
        <end position="119"/>
    </location>
</feature>
<feature type="helix" evidence="71">
    <location>
        <begin position="121"/>
        <end position="126"/>
    </location>
</feature>
<feature type="helix" evidence="71">
    <location>
        <begin position="129"/>
        <end position="138"/>
    </location>
</feature>
<feature type="strand" evidence="70">
    <location>
        <begin position="139"/>
        <end position="142"/>
    </location>
</feature>
<feature type="helix" evidence="71">
    <location>
        <begin position="147"/>
        <end position="157"/>
    </location>
</feature>
<feature type="strand" evidence="71">
    <location>
        <begin position="161"/>
        <end position="166"/>
    </location>
</feature>
<feature type="helix" evidence="71">
    <location>
        <begin position="172"/>
        <end position="175"/>
    </location>
</feature>
<feature type="helix" evidence="71">
    <location>
        <begin position="180"/>
        <end position="182"/>
    </location>
</feature>
<feature type="strand" evidence="71">
    <location>
        <begin position="183"/>
        <end position="185"/>
    </location>
</feature>
<feature type="strand" evidence="71">
    <location>
        <begin position="188"/>
        <end position="196"/>
    </location>
</feature>
<feature type="turn" evidence="71">
    <location>
        <begin position="198"/>
        <end position="200"/>
    </location>
</feature>
<feature type="strand" evidence="71">
    <location>
        <begin position="203"/>
        <end position="205"/>
    </location>
</feature>
<feature type="helix" evidence="71">
    <location>
        <begin position="206"/>
        <end position="215"/>
    </location>
</feature>
<feature type="turn" evidence="71">
    <location>
        <begin position="222"/>
        <end position="224"/>
    </location>
</feature>
<feature type="strand" evidence="71">
    <location>
        <begin position="227"/>
        <end position="232"/>
    </location>
</feature>
<feature type="helix" evidence="71">
    <location>
        <begin position="241"/>
        <end position="250"/>
    </location>
</feature>
<feature type="turn" evidence="72">
    <location>
        <begin position="251"/>
        <end position="253"/>
    </location>
</feature>
<feature type="strand" evidence="71">
    <location>
        <begin position="255"/>
        <end position="261"/>
    </location>
</feature>
<feature type="strand" evidence="75">
    <location>
        <begin position="264"/>
        <end position="266"/>
    </location>
</feature>
<feature type="helix" evidence="71">
    <location>
        <begin position="269"/>
        <end position="275"/>
    </location>
</feature>
<feature type="strand" evidence="71">
    <location>
        <begin position="282"/>
        <end position="288"/>
    </location>
</feature>
<feature type="turn" evidence="73">
    <location>
        <begin position="295"/>
        <end position="297"/>
    </location>
</feature>
<feature type="helix" evidence="74">
    <location>
        <begin position="301"/>
        <end position="303"/>
    </location>
</feature>
<feature type="strand" evidence="71">
    <location>
        <begin position="309"/>
        <end position="311"/>
    </location>
</feature>
<feature type="strand" evidence="71">
    <location>
        <begin position="316"/>
        <end position="322"/>
    </location>
</feature>
<feature type="helix" evidence="71">
    <location>
        <begin position="324"/>
        <end position="334"/>
    </location>
</feature>
<feature type="helix" evidence="71">
    <location>
        <begin position="338"/>
        <end position="353"/>
    </location>
</feature>